<protein>
    <recommendedName>
        <fullName evidence="16">Large ribosomal subunit protein uL29</fullName>
    </recommendedName>
    <alternativeName>
        <fullName>50S ribosomal protein L29</fullName>
    </alternativeName>
</protein>
<sequence length="63" mass="7273">MKAKELREKSVEELNTELLNLLREQFNLRMQAASGQLQQSHLLKQVRRDVARVKTLLNEKAGA</sequence>
<name>RL29_ECOLI</name>
<feature type="chain" id="PRO_0000130384" description="Large ribosomal subunit protein uL29">
    <location>
        <begin position="1"/>
        <end position="63"/>
    </location>
</feature>
<feature type="helix" evidence="19">
    <location>
        <begin position="3"/>
        <end position="7"/>
    </location>
</feature>
<feature type="helix" evidence="19">
    <location>
        <begin position="11"/>
        <end position="34"/>
    </location>
</feature>
<feature type="helix" evidence="19">
    <location>
        <begin position="41"/>
        <end position="60"/>
    </location>
</feature>
<comment type="function">
    <text evidence="3 15">Binds 23S rRNA. It is not essential for growth.</text>
</comment>
<comment type="function">
    <text evidence="3">One of the proteins that surrounds the polypeptide exit tunnel on the outside of the subunit. Contacts trigger factor (PubMed:12226666).</text>
</comment>
<comment type="subunit">
    <text evidence="1 2 3 4 5 6 7 8 9 10 11 12 13 18">Part of the 50s ribosomal subunit (PubMed:10094780, PubMed:1092361, PubMed:12809609, PubMed:16272117, PubMed:21499241, PubMed:24844575, PubMed:25310980, PubMed:27906160, PubMed:27906161, PubMed:27934701). Contacts protein L23 (PubMed:2665813), trigger factor (PubMed:12226666) and protein nascent chains (PubMed:12756233). Might also contact SecE and probably does contact SecG when the SecYEG translocation complex is docked with the ribosome (PubMed:16292303).</text>
</comment>
<comment type="mass spectrometry" mass="7273.4" method="MALDI" evidence="1"/>
<comment type="disruption phenotype">
    <text evidence="3 14">Cells missing both S17 and L29 grow very slowly and have a rather unstable temperature-sensitive phenotype.</text>
</comment>
<comment type="similarity">
    <text evidence="17">Belongs to the universal ribosomal protein uL29 family.</text>
</comment>
<comment type="sequence caution" evidence="17">
    <conflict type="miscellaneous discrepancy" ref="1"/>
    <text>Exchange of two tryptic peptides.</text>
</comment>
<dbReference type="EMBL" id="X02613">
    <property type="protein sequence ID" value="CAA26468.1"/>
    <property type="molecule type" value="Genomic_DNA"/>
</dbReference>
<dbReference type="EMBL" id="U18997">
    <property type="protein sequence ID" value="AAA58109.1"/>
    <property type="molecule type" value="Genomic_DNA"/>
</dbReference>
<dbReference type="EMBL" id="U00096">
    <property type="protein sequence ID" value="AAC76337.1"/>
    <property type="molecule type" value="Genomic_DNA"/>
</dbReference>
<dbReference type="EMBL" id="AP009048">
    <property type="protein sequence ID" value="BAE77979.1"/>
    <property type="molecule type" value="Genomic_DNA"/>
</dbReference>
<dbReference type="PIR" id="B37519">
    <property type="entry name" value="R5EC29"/>
</dbReference>
<dbReference type="RefSeq" id="NP_417771.1">
    <property type="nucleotide sequence ID" value="NC_000913.3"/>
</dbReference>
<dbReference type="RefSeq" id="WP_000644741.1">
    <property type="nucleotide sequence ID" value="NZ_STEB01000038.1"/>
</dbReference>
<dbReference type="PDB" id="1ML5">
    <property type="method" value="EM"/>
    <property type="resolution" value="14.00 A"/>
    <property type="chains" value="w=2-63"/>
</dbReference>
<dbReference type="PDB" id="2J28">
    <property type="method" value="EM"/>
    <property type="resolution" value="8.00 A"/>
    <property type="chains" value="X=1-63"/>
</dbReference>
<dbReference type="PDB" id="2RDO">
    <property type="method" value="EM"/>
    <property type="resolution" value="9.10 A"/>
    <property type="chains" value="X=1-63"/>
</dbReference>
<dbReference type="PDB" id="2VRH">
    <property type="method" value="EM"/>
    <property type="resolution" value="19.00 A"/>
    <property type="chains" value="D=1-63"/>
</dbReference>
<dbReference type="PDB" id="3BBX">
    <property type="method" value="EM"/>
    <property type="resolution" value="10.00 A"/>
    <property type="chains" value="X=1-63"/>
</dbReference>
<dbReference type="PDB" id="3IY9">
    <property type="method" value="EM"/>
    <property type="resolution" value="14.10 A"/>
    <property type="chains" value="X=1-63"/>
</dbReference>
<dbReference type="PDB" id="3J45">
    <property type="method" value="EM"/>
    <property type="resolution" value="9.50 A"/>
    <property type="chains" value="Y=1-63"/>
</dbReference>
<dbReference type="PDB" id="3J46">
    <property type="method" value="EM"/>
    <property type="resolution" value="10.10 A"/>
    <property type="chains" value="Y=1-63"/>
</dbReference>
<dbReference type="PDB" id="3J5L">
    <property type="method" value="EM"/>
    <property type="resolution" value="6.60 A"/>
    <property type="chains" value="Y=1-63"/>
</dbReference>
<dbReference type="PDB" id="3J7Z">
    <property type="method" value="EM"/>
    <property type="resolution" value="3.90 A"/>
    <property type="chains" value="Y=1-63"/>
</dbReference>
<dbReference type="PDB" id="3J8G">
    <property type="method" value="EM"/>
    <property type="resolution" value="5.00 A"/>
    <property type="chains" value="1=1-63"/>
</dbReference>
<dbReference type="PDB" id="3J9Y">
    <property type="method" value="EM"/>
    <property type="resolution" value="3.90 A"/>
    <property type="chains" value="Y=1-63"/>
</dbReference>
<dbReference type="PDB" id="3J9Z">
    <property type="method" value="EM"/>
    <property type="resolution" value="3.60 A"/>
    <property type="chains" value="LW=1-63"/>
</dbReference>
<dbReference type="PDB" id="3JA1">
    <property type="method" value="EM"/>
    <property type="resolution" value="3.60 A"/>
    <property type="chains" value="L0=1-63"/>
</dbReference>
<dbReference type="PDB" id="3JBU">
    <property type="method" value="EM"/>
    <property type="resolution" value="3.64 A"/>
    <property type="chains" value="1=1-63"/>
</dbReference>
<dbReference type="PDB" id="3JBV">
    <property type="method" value="EM"/>
    <property type="resolution" value="3.32 A"/>
    <property type="chains" value="1=1-63"/>
</dbReference>
<dbReference type="PDB" id="3JCD">
    <property type="method" value="EM"/>
    <property type="resolution" value="3.70 A"/>
    <property type="chains" value="Y=1-63"/>
</dbReference>
<dbReference type="PDB" id="3JCE">
    <property type="method" value="EM"/>
    <property type="resolution" value="3.20 A"/>
    <property type="chains" value="Y=1-63"/>
</dbReference>
<dbReference type="PDB" id="3JCJ">
    <property type="method" value="EM"/>
    <property type="resolution" value="3.70 A"/>
    <property type="chains" value="X=1-63"/>
</dbReference>
<dbReference type="PDB" id="3JCN">
    <property type="method" value="EM"/>
    <property type="resolution" value="4.60 A"/>
    <property type="chains" value="Y=1-63"/>
</dbReference>
<dbReference type="PDB" id="4CSU">
    <property type="method" value="EM"/>
    <property type="resolution" value="5.50 A"/>
    <property type="chains" value="1=1-63"/>
</dbReference>
<dbReference type="PDB" id="4U1U">
    <property type="method" value="X-ray"/>
    <property type="resolution" value="2.95 A"/>
    <property type="chains" value="BY/DY=1-63"/>
</dbReference>
<dbReference type="PDB" id="4U1V">
    <property type="method" value="X-ray"/>
    <property type="resolution" value="3.00 A"/>
    <property type="chains" value="BY/DY=1-63"/>
</dbReference>
<dbReference type="PDB" id="4U20">
    <property type="method" value="X-ray"/>
    <property type="resolution" value="2.90 A"/>
    <property type="chains" value="BY/DY=1-63"/>
</dbReference>
<dbReference type="PDB" id="4U24">
    <property type="method" value="X-ray"/>
    <property type="resolution" value="2.90 A"/>
    <property type="chains" value="BY/DY=1-63"/>
</dbReference>
<dbReference type="PDB" id="4U25">
    <property type="method" value="X-ray"/>
    <property type="resolution" value="2.90 A"/>
    <property type="chains" value="BY/DY=1-63"/>
</dbReference>
<dbReference type="PDB" id="4U26">
    <property type="method" value="X-ray"/>
    <property type="resolution" value="2.80 A"/>
    <property type="chains" value="BY/DY=1-63"/>
</dbReference>
<dbReference type="PDB" id="4U27">
    <property type="method" value="X-ray"/>
    <property type="resolution" value="2.80 A"/>
    <property type="chains" value="BY/DY=1-63"/>
</dbReference>
<dbReference type="PDB" id="4UY8">
    <property type="method" value="EM"/>
    <property type="resolution" value="3.80 A"/>
    <property type="chains" value="Y=1-63"/>
</dbReference>
<dbReference type="PDB" id="4V47">
    <property type="method" value="EM"/>
    <property type="resolution" value="12.30 A"/>
    <property type="chains" value="AW=1-63"/>
</dbReference>
<dbReference type="PDB" id="4V48">
    <property type="method" value="EM"/>
    <property type="resolution" value="11.50 A"/>
    <property type="chains" value="AW=1-63"/>
</dbReference>
<dbReference type="PDB" id="4V4H">
    <property type="method" value="X-ray"/>
    <property type="resolution" value="3.46 A"/>
    <property type="chains" value="BX/DX=1-63"/>
</dbReference>
<dbReference type="PDB" id="4V4Q">
    <property type="method" value="X-ray"/>
    <property type="resolution" value="3.46 A"/>
    <property type="chains" value="BX/DX=1-63"/>
</dbReference>
<dbReference type="PDB" id="4V4V">
    <property type="method" value="EM"/>
    <property type="resolution" value="15.00 A"/>
    <property type="chains" value="BW=1-60"/>
</dbReference>
<dbReference type="PDB" id="4V4W">
    <property type="method" value="EM"/>
    <property type="resolution" value="15.00 A"/>
    <property type="chains" value="BW=1-60"/>
</dbReference>
<dbReference type="PDB" id="4V50">
    <property type="method" value="X-ray"/>
    <property type="resolution" value="3.22 A"/>
    <property type="chains" value="BY/DY=1-63"/>
</dbReference>
<dbReference type="PDB" id="4V52">
    <property type="method" value="X-ray"/>
    <property type="resolution" value="3.21 A"/>
    <property type="chains" value="BX/DX=1-63"/>
</dbReference>
<dbReference type="PDB" id="4V53">
    <property type="method" value="X-ray"/>
    <property type="resolution" value="3.54 A"/>
    <property type="chains" value="BX/DX=1-63"/>
</dbReference>
<dbReference type="PDB" id="4V54">
    <property type="method" value="X-ray"/>
    <property type="resolution" value="3.30 A"/>
    <property type="chains" value="BX/DX=1-63"/>
</dbReference>
<dbReference type="PDB" id="4V55">
    <property type="method" value="X-ray"/>
    <property type="resolution" value="4.00 A"/>
    <property type="chains" value="BX/DX=1-63"/>
</dbReference>
<dbReference type="PDB" id="4V56">
    <property type="method" value="X-ray"/>
    <property type="resolution" value="3.93 A"/>
    <property type="chains" value="BX/DX=1-63"/>
</dbReference>
<dbReference type="PDB" id="4V57">
    <property type="method" value="X-ray"/>
    <property type="resolution" value="3.50 A"/>
    <property type="chains" value="BX/DX=1-63"/>
</dbReference>
<dbReference type="PDB" id="4V5B">
    <property type="method" value="X-ray"/>
    <property type="resolution" value="3.74 A"/>
    <property type="chains" value="AX/CX=1-63"/>
</dbReference>
<dbReference type="PDB" id="4V5H">
    <property type="method" value="EM"/>
    <property type="resolution" value="5.80 A"/>
    <property type="chains" value="B1=1-63"/>
</dbReference>
<dbReference type="PDB" id="4V5Y">
    <property type="method" value="X-ray"/>
    <property type="resolution" value="4.45 A"/>
    <property type="chains" value="BX/DX=1-63"/>
</dbReference>
<dbReference type="PDB" id="4V64">
    <property type="method" value="X-ray"/>
    <property type="resolution" value="3.50 A"/>
    <property type="chains" value="BX/DX=1-63"/>
</dbReference>
<dbReference type="PDB" id="4V65">
    <property type="method" value="EM"/>
    <property type="resolution" value="9.00 A"/>
    <property type="chains" value="BQ=1-63"/>
</dbReference>
<dbReference type="PDB" id="4V66">
    <property type="method" value="EM"/>
    <property type="resolution" value="9.00 A"/>
    <property type="chains" value="BQ=1-63"/>
</dbReference>
<dbReference type="PDB" id="4V69">
    <property type="method" value="EM"/>
    <property type="resolution" value="6.70 A"/>
    <property type="chains" value="BY=1-63"/>
</dbReference>
<dbReference type="PDB" id="4V6C">
    <property type="method" value="X-ray"/>
    <property type="resolution" value="3.19 A"/>
    <property type="chains" value="BY/DY=1-63"/>
</dbReference>
<dbReference type="PDB" id="4V6D">
    <property type="method" value="X-ray"/>
    <property type="resolution" value="3.81 A"/>
    <property type="chains" value="BY/DY=1-63"/>
</dbReference>
<dbReference type="PDB" id="4V6E">
    <property type="method" value="X-ray"/>
    <property type="resolution" value="3.71 A"/>
    <property type="chains" value="BY/DY=1-63"/>
</dbReference>
<dbReference type="PDB" id="4V6K">
    <property type="method" value="EM"/>
    <property type="resolution" value="8.25 A"/>
    <property type="chains" value="AZ=1-63"/>
</dbReference>
<dbReference type="PDB" id="4V6L">
    <property type="method" value="EM"/>
    <property type="resolution" value="13.20 A"/>
    <property type="chains" value="BZ=1-63"/>
</dbReference>
<dbReference type="PDB" id="4V6M">
    <property type="method" value="EM"/>
    <property type="resolution" value="7.10 A"/>
    <property type="chains" value="BY=1-63"/>
</dbReference>
<dbReference type="PDB" id="4V6N">
    <property type="method" value="EM"/>
    <property type="resolution" value="12.10 A"/>
    <property type="chains" value="A0=1-63"/>
</dbReference>
<dbReference type="PDB" id="4V6O">
    <property type="method" value="EM"/>
    <property type="resolution" value="14.70 A"/>
    <property type="chains" value="B0=1-63"/>
</dbReference>
<dbReference type="PDB" id="4V6P">
    <property type="method" value="EM"/>
    <property type="resolution" value="13.50 A"/>
    <property type="chains" value="B0=1-63"/>
</dbReference>
<dbReference type="PDB" id="4V6Q">
    <property type="method" value="EM"/>
    <property type="resolution" value="11.50 A"/>
    <property type="chains" value="B0=1-63"/>
</dbReference>
<dbReference type="PDB" id="4V6R">
    <property type="method" value="EM"/>
    <property type="resolution" value="11.50 A"/>
    <property type="chains" value="B0=1-63"/>
</dbReference>
<dbReference type="PDB" id="4V6S">
    <property type="method" value="EM"/>
    <property type="resolution" value="13.10 A"/>
    <property type="chains" value="A0=1-63"/>
</dbReference>
<dbReference type="PDB" id="4V6T">
    <property type="method" value="EM"/>
    <property type="resolution" value="8.30 A"/>
    <property type="chains" value="BY=1-63"/>
</dbReference>
<dbReference type="PDB" id="4V6V">
    <property type="method" value="EM"/>
    <property type="resolution" value="9.80 A"/>
    <property type="chains" value="B2=1-63"/>
</dbReference>
<dbReference type="PDB" id="4V6Y">
    <property type="method" value="EM"/>
    <property type="resolution" value="12.00 A"/>
    <property type="chains" value="BY=1-63"/>
</dbReference>
<dbReference type="PDB" id="4V6Z">
    <property type="method" value="EM"/>
    <property type="resolution" value="12.00 A"/>
    <property type="chains" value="BY=1-63"/>
</dbReference>
<dbReference type="PDB" id="4V70">
    <property type="method" value="EM"/>
    <property type="resolution" value="17.00 A"/>
    <property type="chains" value="BY=1-63"/>
</dbReference>
<dbReference type="PDB" id="4V71">
    <property type="method" value="EM"/>
    <property type="resolution" value="20.00 A"/>
    <property type="chains" value="BY=1-63"/>
</dbReference>
<dbReference type="PDB" id="4V72">
    <property type="method" value="EM"/>
    <property type="resolution" value="13.00 A"/>
    <property type="chains" value="BY=1-63"/>
</dbReference>
<dbReference type="PDB" id="4V73">
    <property type="method" value="EM"/>
    <property type="resolution" value="15.00 A"/>
    <property type="chains" value="BY=1-63"/>
</dbReference>
<dbReference type="PDB" id="4V74">
    <property type="method" value="EM"/>
    <property type="resolution" value="17.00 A"/>
    <property type="chains" value="BY=1-63"/>
</dbReference>
<dbReference type="PDB" id="4V75">
    <property type="method" value="EM"/>
    <property type="resolution" value="12.00 A"/>
    <property type="chains" value="BY=1-63"/>
</dbReference>
<dbReference type="PDB" id="4V76">
    <property type="method" value="EM"/>
    <property type="resolution" value="17.00 A"/>
    <property type="chains" value="BY=1-63"/>
</dbReference>
<dbReference type="PDB" id="4V77">
    <property type="method" value="EM"/>
    <property type="resolution" value="17.00 A"/>
    <property type="chains" value="BY=1-63"/>
</dbReference>
<dbReference type="PDB" id="4V78">
    <property type="method" value="EM"/>
    <property type="resolution" value="20.00 A"/>
    <property type="chains" value="BY=1-63"/>
</dbReference>
<dbReference type="PDB" id="4V79">
    <property type="method" value="EM"/>
    <property type="resolution" value="15.00 A"/>
    <property type="chains" value="BY=1-63"/>
</dbReference>
<dbReference type="PDB" id="4V7A">
    <property type="method" value="EM"/>
    <property type="resolution" value="9.00 A"/>
    <property type="chains" value="BY=1-63"/>
</dbReference>
<dbReference type="PDB" id="4V7B">
    <property type="method" value="EM"/>
    <property type="resolution" value="6.80 A"/>
    <property type="chains" value="BY=1-63"/>
</dbReference>
<dbReference type="PDB" id="4V7C">
    <property type="method" value="EM"/>
    <property type="resolution" value="7.60 A"/>
    <property type="chains" value="B1=1-63"/>
</dbReference>
<dbReference type="PDB" id="4V7D">
    <property type="method" value="EM"/>
    <property type="resolution" value="7.60 A"/>
    <property type="chains" value="A2=1-63"/>
</dbReference>
<dbReference type="PDB" id="4V7I">
    <property type="method" value="EM"/>
    <property type="resolution" value="9.60 A"/>
    <property type="chains" value="AY=1-63"/>
</dbReference>
<dbReference type="PDB" id="4V7S">
    <property type="method" value="X-ray"/>
    <property type="resolution" value="3.25 A"/>
    <property type="chains" value="BY/DY=1-63"/>
</dbReference>
<dbReference type="PDB" id="4V7T">
    <property type="method" value="X-ray"/>
    <property type="resolution" value="3.19 A"/>
    <property type="chains" value="BY/DY=1-63"/>
</dbReference>
<dbReference type="PDB" id="4V7U">
    <property type="method" value="X-ray"/>
    <property type="resolution" value="3.10 A"/>
    <property type="chains" value="BY/DY=1-63"/>
</dbReference>
<dbReference type="PDB" id="4V7V">
    <property type="method" value="X-ray"/>
    <property type="resolution" value="3.29 A"/>
    <property type="chains" value="BY/DY=1-63"/>
</dbReference>
<dbReference type="PDB" id="4V85">
    <property type="method" value="X-ray"/>
    <property type="resolution" value="3.20 A"/>
    <property type="chains" value="B2=1-63"/>
</dbReference>
<dbReference type="PDB" id="4V89">
    <property type="method" value="X-ray"/>
    <property type="resolution" value="3.70 A"/>
    <property type="chains" value="B2=1-63"/>
</dbReference>
<dbReference type="PDB" id="4V9C">
    <property type="method" value="X-ray"/>
    <property type="resolution" value="3.30 A"/>
    <property type="chains" value="BY/DY=1-63"/>
</dbReference>
<dbReference type="PDB" id="4V9D">
    <property type="method" value="X-ray"/>
    <property type="resolution" value="3.00 A"/>
    <property type="chains" value="CY/DY=1-63"/>
</dbReference>
<dbReference type="PDB" id="4V9O">
    <property type="method" value="X-ray"/>
    <property type="resolution" value="2.90 A"/>
    <property type="chains" value="AY/CY/EY/GY=1-63"/>
</dbReference>
<dbReference type="PDB" id="4V9P">
    <property type="method" value="X-ray"/>
    <property type="resolution" value="2.90 A"/>
    <property type="chains" value="AY/CY/EY/GY=1-63"/>
</dbReference>
<dbReference type="PDB" id="4WF1">
    <property type="method" value="X-ray"/>
    <property type="resolution" value="3.09 A"/>
    <property type="chains" value="BY/DY=1-63"/>
</dbReference>
<dbReference type="PDB" id="4WOI">
    <property type="method" value="X-ray"/>
    <property type="resolution" value="3.00 A"/>
    <property type="chains" value="BY/CY=1-63"/>
</dbReference>
<dbReference type="PDB" id="4WWW">
    <property type="method" value="X-ray"/>
    <property type="resolution" value="3.10 A"/>
    <property type="chains" value="RY/YY=1-63"/>
</dbReference>
<dbReference type="PDB" id="4YBB">
    <property type="method" value="X-ray"/>
    <property type="resolution" value="2.10 A"/>
    <property type="chains" value="CZ/DZ=2-63"/>
</dbReference>
<dbReference type="PDB" id="5ADY">
    <property type="method" value="EM"/>
    <property type="resolution" value="4.50 A"/>
    <property type="chains" value="Y=1-63"/>
</dbReference>
<dbReference type="PDB" id="5AFI">
    <property type="method" value="EM"/>
    <property type="resolution" value="2.90 A"/>
    <property type="chains" value="Y=1-63"/>
</dbReference>
<dbReference type="PDB" id="5AKA">
    <property type="method" value="EM"/>
    <property type="resolution" value="5.70 A"/>
    <property type="chains" value="X=1-63"/>
</dbReference>
<dbReference type="PDB" id="5GAD">
    <property type="method" value="EM"/>
    <property type="resolution" value="3.70 A"/>
    <property type="chains" value="Z=1-63"/>
</dbReference>
<dbReference type="PDB" id="5GAE">
    <property type="method" value="EM"/>
    <property type="resolution" value="3.33 A"/>
    <property type="chains" value="Z=1-63"/>
</dbReference>
<dbReference type="PDB" id="5GAF">
    <property type="method" value="EM"/>
    <property type="resolution" value="4.30 A"/>
    <property type="chains" value="Z=2-63"/>
</dbReference>
<dbReference type="PDB" id="5GAG">
    <property type="method" value="EM"/>
    <property type="resolution" value="3.80 A"/>
    <property type="chains" value="Z=1-63"/>
</dbReference>
<dbReference type="PDB" id="5GAH">
    <property type="method" value="EM"/>
    <property type="resolution" value="3.80 A"/>
    <property type="chains" value="Z=1-63"/>
</dbReference>
<dbReference type="PDB" id="5H5U">
    <property type="method" value="EM"/>
    <property type="resolution" value="3.00 A"/>
    <property type="chains" value="Z=1-63"/>
</dbReference>
<dbReference type="PDB" id="5IQR">
    <property type="method" value="EM"/>
    <property type="resolution" value="3.00 A"/>
    <property type="chains" value="Y=1-63"/>
</dbReference>
<dbReference type="PDB" id="5IT8">
    <property type="method" value="X-ray"/>
    <property type="resolution" value="3.12 A"/>
    <property type="chains" value="CZ/DZ=2-63"/>
</dbReference>
<dbReference type="PDB" id="5J5B">
    <property type="method" value="X-ray"/>
    <property type="resolution" value="2.80 A"/>
    <property type="chains" value="CZ/DZ=2-63"/>
</dbReference>
<dbReference type="PDB" id="5J7L">
    <property type="method" value="X-ray"/>
    <property type="resolution" value="3.00 A"/>
    <property type="chains" value="CZ/DZ=2-63"/>
</dbReference>
<dbReference type="PDB" id="5J88">
    <property type="method" value="X-ray"/>
    <property type="resolution" value="3.32 A"/>
    <property type="chains" value="CZ/DZ=2-63"/>
</dbReference>
<dbReference type="PDB" id="5J8A">
    <property type="method" value="X-ray"/>
    <property type="resolution" value="3.10 A"/>
    <property type="chains" value="CZ/DZ=2-63"/>
</dbReference>
<dbReference type="PDB" id="5J91">
    <property type="method" value="X-ray"/>
    <property type="resolution" value="2.96 A"/>
    <property type="chains" value="CZ/DZ=2-63"/>
</dbReference>
<dbReference type="PDB" id="5JC9">
    <property type="method" value="X-ray"/>
    <property type="resolution" value="3.03 A"/>
    <property type="chains" value="CZ/DZ=2-63"/>
</dbReference>
<dbReference type="PDB" id="5JTE">
    <property type="method" value="EM"/>
    <property type="resolution" value="3.60 A"/>
    <property type="chains" value="BY=1-63"/>
</dbReference>
<dbReference type="PDB" id="5JU8">
    <property type="method" value="EM"/>
    <property type="resolution" value="3.60 A"/>
    <property type="chains" value="BY=1-63"/>
</dbReference>
<dbReference type="PDB" id="5KCR">
    <property type="method" value="EM"/>
    <property type="resolution" value="3.60 A"/>
    <property type="chains" value="12=1-63"/>
</dbReference>
<dbReference type="PDB" id="5KCS">
    <property type="method" value="EM"/>
    <property type="resolution" value="3.90 A"/>
    <property type="chains" value="12=1-63"/>
</dbReference>
<dbReference type="PDB" id="5KPS">
    <property type="method" value="EM"/>
    <property type="resolution" value="3.90 A"/>
    <property type="chains" value="Y=1-63"/>
</dbReference>
<dbReference type="PDB" id="5KPV">
    <property type="method" value="EM"/>
    <property type="resolution" value="4.10 A"/>
    <property type="chains" value="X=1-63"/>
</dbReference>
<dbReference type="PDB" id="5KPW">
    <property type="method" value="EM"/>
    <property type="resolution" value="3.90 A"/>
    <property type="chains" value="X=1-63"/>
</dbReference>
<dbReference type="PDB" id="5KPX">
    <property type="method" value="EM"/>
    <property type="resolution" value="3.90 A"/>
    <property type="chains" value="X=1-63"/>
</dbReference>
<dbReference type="PDB" id="5L3P">
    <property type="method" value="EM"/>
    <property type="resolution" value="3.70 A"/>
    <property type="chains" value="2=1-63"/>
</dbReference>
<dbReference type="PDB" id="5LZA">
    <property type="method" value="EM"/>
    <property type="resolution" value="3.60 A"/>
    <property type="chains" value="Y=1-63"/>
</dbReference>
<dbReference type="PDB" id="5LZB">
    <property type="method" value="EM"/>
    <property type="resolution" value="5.30 A"/>
    <property type="chains" value="Y=1-63"/>
</dbReference>
<dbReference type="PDB" id="5LZC">
    <property type="method" value="EM"/>
    <property type="resolution" value="4.80 A"/>
    <property type="chains" value="Y=1-63"/>
</dbReference>
<dbReference type="PDB" id="5LZD">
    <property type="method" value="EM"/>
    <property type="resolution" value="3.40 A"/>
    <property type="chains" value="Y=1-63"/>
</dbReference>
<dbReference type="PDB" id="5LZE">
    <property type="method" value="EM"/>
    <property type="resolution" value="3.50 A"/>
    <property type="chains" value="Y=1-63"/>
</dbReference>
<dbReference type="PDB" id="5LZF">
    <property type="method" value="EM"/>
    <property type="resolution" value="4.60 A"/>
    <property type="chains" value="Y=1-63"/>
</dbReference>
<dbReference type="PDB" id="5MDV">
    <property type="method" value="EM"/>
    <property type="resolution" value="2.97 A"/>
    <property type="chains" value="Y=1-63"/>
</dbReference>
<dbReference type="PDB" id="5MDW">
    <property type="method" value="EM"/>
    <property type="resolution" value="3.06 A"/>
    <property type="chains" value="Y=1-63"/>
</dbReference>
<dbReference type="PDB" id="5MDY">
    <property type="method" value="EM"/>
    <property type="resolution" value="3.35 A"/>
    <property type="chains" value="Y=1-63"/>
</dbReference>
<dbReference type="PDB" id="5MDZ">
    <property type="method" value="EM"/>
    <property type="resolution" value="3.10 A"/>
    <property type="chains" value="Y=1-63"/>
</dbReference>
<dbReference type="PDB" id="5MGP">
    <property type="method" value="EM"/>
    <property type="resolution" value="3.10 A"/>
    <property type="chains" value="Y=1-63"/>
</dbReference>
<dbReference type="PDB" id="5NCO">
    <property type="method" value="EM"/>
    <property type="resolution" value="4.80 A"/>
    <property type="chains" value="Z=2-63"/>
</dbReference>
<dbReference type="PDB" id="5NP6">
    <property type="method" value="EM"/>
    <property type="resolution" value="3.60 A"/>
    <property type="chains" value="w=1-63"/>
</dbReference>
<dbReference type="PDB" id="5NWY">
    <property type="method" value="EM"/>
    <property type="resolution" value="2.93 A"/>
    <property type="chains" value="l=1-63"/>
</dbReference>
<dbReference type="PDB" id="5O2R">
    <property type="method" value="EM"/>
    <property type="resolution" value="3.40 A"/>
    <property type="chains" value="Y=1-63"/>
</dbReference>
<dbReference type="PDB" id="5U4I">
    <property type="method" value="EM"/>
    <property type="resolution" value="3.50 A"/>
    <property type="chains" value="Z=1-63"/>
</dbReference>
<dbReference type="PDB" id="5U9F">
    <property type="method" value="EM"/>
    <property type="resolution" value="3.20 A"/>
    <property type="chains" value="27=1-63"/>
</dbReference>
<dbReference type="PDB" id="5U9G">
    <property type="method" value="EM"/>
    <property type="resolution" value="3.20 A"/>
    <property type="chains" value="27=1-63"/>
</dbReference>
<dbReference type="PDB" id="5UYK">
    <property type="method" value="EM"/>
    <property type="resolution" value="3.90 A"/>
    <property type="chains" value="27=1-63"/>
</dbReference>
<dbReference type="PDB" id="5UYL">
    <property type="method" value="EM"/>
    <property type="resolution" value="3.60 A"/>
    <property type="chains" value="27=1-63"/>
</dbReference>
<dbReference type="PDB" id="5UYM">
    <property type="method" value="EM"/>
    <property type="resolution" value="3.20 A"/>
    <property type="chains" value="27=1-63"/>
</dbReference>
<dbReference type="PDB" id="5UYN">
    <property type="method" value="EM"/>
    <property type="resolution" value="4.00 A"/>
    <property type="chains" value="27=1-63"/>
</dbReference>
<dbReference type="PDB" id="5UYP">
    <property type="method" value="EM"/>
    <property type="resolution" value="3.90 A"/>
    <property type="chains" value="27=1-63"/>
</dbReference>
<dbReference type="PDB" id="5UYQ">
    <property type="method" value="EM"/>
    <property type="resolution" value="3.80 A"/>
    <property type="chains" value="27=1-63"/>
</dbReference>
<dbReference type="PDB" id="5WDT">
    <property type="method" value="EM"/>
    <property type="resolution" value="3.00 A"/>
    <property type="chains" value="Y=1-60"/>
</dbReference>
<dbReference type="PDB" id="5WE4">
    <property type="method" value="EM"/>
    <property type="resolution" value="3.10 A"/>
    <property type="chains" value="Y=1-60"/>
</dbReference>
<dbReference type="PDB" id="5WE6">
    <property type="method" value="EM"/>
    <property type="resolution" value="3.40 A"/>
    <property type="chains" value="Y=1-60"/>
</dbReference>
<dbReference type="PDB" id="5WF0">
    <property type="method" value="EM"/>
    <property type="resolution" value="3.60 A"/>
    <property type="chains" value="Y=1-60"/>
</dbReference>
<dbReference type="PDB" id="5WFK">
    <property type="method" value="EM"/>
    <property type="resolution" value="3.40 A"/>
    <property type="chains" value="Y=1-60"/>
</dbReference>
<dbReference type="PDB" id="5WFS">
    <property type="method" value="EM"/>
    <property type="resolution" value="3.00 A"/>
    <property type="chains" value="Y=1-60"/>
</dbReference>
<dbReference type="PDB" id="6BU8">
    <property type="method" value="EM"/>
    <property type="resolution" value="3.50 A"/>
    <property type="chains" value="27=1-63"/>
</dbReference>
<dbReference type="PDB" id="6BY1">
    <property type="method" value="X-ray"/>
    <property type="resolution" value="3.94 A"/>
    <property type="chains" value="CY/DY=1-63"/>
</dbReference>
<dbReference type="PDB" id="6C4I">
    <property type="method" value="EM"/>
    <property type="resolution" value="3.24 A"/>
    <property type="chains" value="Z=1-63"/>
</dbReference>
<dbReference type="PDB" id="6DNC">
    <property type="method" value="EM"/>
    <property type="resolution" value="3.70 A"/>
    <property type="chains" value="CA=1-63"/>
</dbReference>
<dbReference type="PDB" id="6ENF">
    <property type="method" value="EM"/>
    <property type="resolution" value="3.20 A"/>
    <property type="chains" value="Y=1-63"/>
</dbReference>
<dbReference type="PDB" id="6ENJ">
    <property type="method" value="EM"/>
    <property type="resolution" value="3.70 A"/>
    <property type="chains" value="Y=1-63"/>
</dbReference>
<dbReference type="PDB" id="6ENU">
    <property type="method" value="EM"/>
    <property type="resolution" value="3.10 A"/>
    <property type="chains" value="Y=1-63"/>
</dbReference>
<dbReference type="PDB" id="6GBZ">
    <property type="method" value="EM"/>
    <property type="resolution" value="3.80 A"/>
    <property type="chains" value="Y=1-63"/>
</dbReference>
<dbReference type="PDB" id="6GC0">
    <property type="method" value="EM"/>
    <property type="resolution" value="3.80 A"/>
    <property type="chains" value="Y=1-63"/>
</dbReference>
<dbReference type="PDB" id="6GC4">
    <property type="method" value="EM"/>
    <property type="resolution" value="4.30 A"/>
    <property type="chains" value="Y=1-63"/>
</dbReference>
<dbReference type="PDB" id="6GC6">
    <property type="method" value="EM"/>
    <property type="resolution" value="4.30 A"/>
    <property type="chains" value="Y=1-63"/>
</dbReference>
<dbReference type="PDB" id="6GC7">
    <property type="method" value="EM"/>
    <property type="resolution" value="4.30 A"/>
    <property type="chains" value="Y=1-63"/>
</dbReference>
<dbReference type="PDB" id="6GC8">
    <property type="method" value="EM"/>
    <property type="resolution" value="3.80 A"/>
    <property type="chains" value="Y=1-63"/>
</dbReference>
<dbReference type="PDB" id="6GWT">
    <property type="method" value="EM"/>
    <property type="resolution" value="3.80 A"/>
    <property type="chains" value="Y=1-63"/>
</dbReference>
<dbReference type="PDB" id="6GXM">
    <property type="method" value="EM"/>
    <property type="resolution" value="3.80 A"/>
    <property type="chains" value="Y=1-63"/>
</dbReference>
<dbReference type="PDB" id="6GXN">
    <property type="method" value="EM"/>
    <property type="resolution" value="3.90 A"/>
    <property type="chains" value="Y=1-63"/>
</dbReference>
<dbReference type="PDB" id="6GXO">
    <property type="method" value="EM"/>
    <property type="resolution" value="3.90 A"/>
    <property type="chains" value="Y=1-63"/>
</dbReference>
<dbReference type="PDB" id="6GXP">
    <property type="method" value="EM"/>
    <property type="resolution" value="4.40 A"/>
    <property type="chains" value="Y=1-63"/>
</dbReference>
<dbReference type="PDB" id="6H4N">
    <property type="method" value="EM"/>
    <property type="resolution" value="3.00 A"/>
    <property type="chains" value="Y=1-63"/>
</dbReference>
<dbReference type="PDB" id="6H58">
    <property type="method" value="EM"/>
    <property type="resolution" value="7.90 A"/>
    <property type="chains" value="Y/YY=1-63"/>
</dbReference>
<dbReference type="PDB" id="6HRM">
    <property type="method" value="EM"/>
    <property type="resolution" value="2.96 A"/>
    <property type="chains" value="Y=2-63"/>
</dbReference>
<dbReference type="PDB" id="6I0Y">
    <property type="method" value="EM"/>
    <property type="resolution" value="3.20 A"/>
    <property type="chains" value="Y=1-63"/>
</dbReference>
<dbReference type="PDB" id="6I7V">
    <property type="method" value="X-ray"/>
    <property type="resolution" value="2.90 A"/>
    <property type="chains" value="CZ/DZ=2-63"/>
</dbReference>
<dbReference type="PDB" id="6O9J">
    <property type="method" value="EM"/>
    <property type="resolution" value="3.90 A"/>
    <property type="chains" value="X=1-63"/>
</dbReference>
<dbReference type="PDB" id="6O9K">
    <property type="method" value="EM"/>
    <property type="resolution" value="4.00 A"/>
    <property type="chains" value="2=1-63"/>
</dbReference>
<dbReference type="PDB" id="6OFX">
    <property type="method" value="EM"/>
    <property type="resolution" value="3.30 A"/>
    <property type="chains" value="y=1-63"/>
</dbReference>
<dbReference type="PDB" id="6OG7">
    <property type="method" value="EM"/>
    <property type="resolution" value="3.30 A"/>
    <property type="chains" value="y=1-63"/>
</dbReference>
<dbReference type="PDB" id="6OGF">
    <property type="method" value="EM"/>
    <property type="resolution" value="3.90 A"/>
    <property type="chains" value="y=1-63"/>
</dbReference>
<dbReference type="PDB" id="6OGG">
    <property type="method" value="EM"/>
    <property type="resolution" value="4.20 A"/>
    <property type="chains" value="y=1-63"/>
</dbReference>
<dbReference type="PDB" id="6OGI">
    <property type="method" value="EM"/>
    <property type="resolution" value="3.40 A"/>
    <property type="chains" value="y=1-63"/>
</dbReference>
<dbReference type="PDB" id="6OM6">
    <property type="method" value="EM"/>
    <property type="resolution" value="3.10 A"/>
    <property type="chains" value="Y=1-63"/>
</dbReference>
<dbReference type="PDB" id="6ORE">
    <property type="method" value="EM"/>
    <property type="resolution" value="2.90 A"/>
    <property type="chains" value="Y=2-63"/>
</dbReference>
<dbReference type="PDB" id="6ORL">
    <property type="method" value="EM"/>
    <property type="resolution" value="3.50 A"/>
    <property type="chains" value="Y=2-63"/>
</dbReference>
<dbReference type="PDB" id="6OSK">
    <property type="method" value="EM"/>
    <property type="resolution" value="3.60 A"/>
    <property type="chains" value="Y=2-63"/>
</dbReference>
<dbReference type="PDB" id="6OSQ">
    <property type="method" value="EM"/>
    <property type="resolution" value="3.50 A"/>
    <property type="chains" value="Y=2-63"/>
</dbReference>
<dbReference type="PDB" id="6OST">
    <property type="method" value="EM"/>
    <property type="resolution" value="4.20 A"/>
    <property type="chains" value="Y=2-63"/>
</dbReference>
<dbReference type="PDB" id="6OT3">
    <property type="method" value="EM"/>
    <property type="resolution" value="3.90 A"/>
    <property type="chains" value="Y=2-63"/>
</dbReference>
<dbReference type="PDB" id="6OUO">
    <property type="method" value="EM"/>
    <property type="resolution" value="3.70 A"/>
    <property type="chains" value="Y=2-63"/>
</dbReference>
<dbReference type="PDB" id="6PJ6">
    <property type="method" value="EM"/>
    <property type="resolution" value="2.20 A"/>
    <property type="chains" value="g=2-63"/>
</dbReference>
<dbReference type="PDB" id="6Q98">
    <property type="method" value="EM"/>
    <property type="resolution" value="4.30 A"/>
    <property type="chains" value="Y=1-63"/>
</dbReference>
<dbReference type="PDB" id="6Q9A">
    <property type="method" value="EM"/>
    <property type="resolution" value="3.70 A"/>
    <property type="chains" value="Y=2-63"/>
</dbReference>
<dbReference type="PDB" id="6QDW">
    <property type="method" value="EM"/>
    <property type="resolution" value="2.83 A"/>
    <property type="chains" value="1=1-63"/>
</dbReference>
<dbReference type="PDB" id="6QUL">
    <property type="method" value="EM"/>
    <property type="resolution" value="3.00 A"/>
    <property type="chains" value="Z=1-63"/>
</dbReference>
<dbReference type="PDB" id="6S0K">
    <property type="method" value="EM"/>
    <property type="resolution" value="3.10 A"/>
    <property type="chains" value="Z=1-63"/>
</dbReference>
<dbReference type="PDB" id="6SZS">
    <property type="method" value="EM"/>
    <property type="resolution" value="3.06 A"/>
    <property type="chains" value="Y=1-63"/>
</dbReference>
<dbReference type="PDB" id="6TBV">
    <property type="method" value="EM"/>
    <property type="resolution" value="2.70 A"/>
    <property type="chains" value="L291=1-63"/>
</dbReference>
<dbReference type="PDB" id="6TC3">
    <property type="method" value="EM"/>
    <property type="resolution" value="2.70 A"/>
    <property type="chains" value="L291=1-63"/>
</dbReference>
<dbReference type="PDB" id="6U48">
    <property type="method" value="EM"/>
    <property type="resolution" value="2.87 A"/>
    <property type="chains" value="CZ=2-63"/>
</dbReference>
<dbReference type="PDB" id="6VU3">
    <property type="method" value="EM"/>
    <property type="resolution" value="3.70 A"/>
    <property type="chains" value="e=2-63"/>
</dbReference>
<dbReference type="PDB" id="6VWL">
    <property type="method" value="EM"/>
    <property type="resolution" value="3.10 A"/>
    <property type="chains" value="W=1-63"/>
</dbReference>
<dbReference type="PDB" id="6VWM">
    <property type="method" value="EM"/>
    <property type="resolution" value="3.40 A"/>
    <property type="chains" value="W=1-63"/>
</dbReference>
<dbReference type="PDB" id="6VWN">
    <property type="method" value="EM"/>
    <property type="resolution" value="3.40 A"/>
    <property type="chains" value="W=1-63"/>
</dbReference>
<dbReference type="PDB" id="6VYQ">
    <property type="method" value="EM"/>
    <property type="resolution" value="3.70 A"/>
    <property type="chains" value="e=1-63"/>
</dbReference>
<dbReference type="PDB" id="6VYR">
    <property type="method" value="EM"/>
    <property type="resolution" value="3.80 A"/>
    <property type="chains" value="e=1-63"/>
</dbReference>
<dbReference type="PDB" id="6VYS">
    <property type="method" value="EM"/>
    <property type="resolution" value="3.70 A"/>
    <property type="chains" value="e=1-63"/>
</dbReference>
<dbReference type="PDB" id="6VYT">
    <property type="method" value="EM"/>
    <property type="resolution" value="14.00 A"/>
    <property type="chains" value="e=1-63"/>
</dbReference>
<dbReference type="PDB" id="6VYU">
    <property type="method" value="EM"/>
    <property type="resolution" value="7.00 A"/>
    <property type="chains" value="e=1-63"/>
</dbReference>
<dbReference type="PDB" id="6VYW">
    <property type="method" value="EM"/>
    <property type="resolution" value="7.00 A"/>
    <property type="chains" value="e=1-63"/>
</dbReference>
<dbReference type="PDB" id="6VYX">
    <property type="method" value="EM"/>
    <property type="resolution" value="9.90 A"/>
    <property type="chains" value="e=1-63"/>
</dbReference>
<dbReference type="PDB" id="6VYY">
    <property type="method" value="EM"/>
    <property type="resolution" value="9.90 A"/>
    <property type="chains" value="e=1-63"/>
</dbReference>
<dbReference type="PDB" id="6VYZ">
    <property type="method" value="EM"/>
    <property type="resolution" value="9.90 A"/>
    <property type="chains" value="e=2-63"/>
</dbReference>
<dbReference type="PDB" id="6VZ2">
    <property type="method" value="EM"/>
    <property type="resolution" value="10.00 A"/>
    <property type="chains" value="e=2-63"/>
</dbReference>
<dbReference type="PDB" id="6VZ3">
    <property type="method" value="EM"/>
    <property type="resolution" value="8.90 A"/>
    <property type="chains" value="e=2-63"/>
</dbReference>
<dbReference type="PDB" id="6VZ5">
    <property type="method" value="EM"/>
    <property type="resolution" value="8.90 A"/>
    <property type="chains" value="e=1-63"/>
</dbReference>
<dbReference type="PDB" id="6VZ7">
    <property type="method" value="EM"/>
    <property type="resolution" value="7.00 A"/>
    <property type="chains" value="e=2-63"/>
</dbReference>
<dbReference type="PDB" id="6VZJ">
    <property type="method" value="EM"/>
    <property type="resolution" value="4.10 A"/>
    <property type="chains" value="e=2-63"/>
</dbReference>
<dbReference type="PDB" id="6WD0">
    <property type="method" value="EM"/>
    <property type="resolution" value="3.00 A"/>
    <property type="chains" value="y=1-63"/>
</dbReference>
<dbReference type="PDB" id="6WD1">
    <property type="method" value="EM"/>
    <property type="resolution" value="3.30 A"/>
    <property type="chains" value="y=1-63"/>
</dbReference>
<dbReference type="PDB" id="6WD2">
    <property type="method" value="EM"/>
    <property type="resolution" value="3.60 A"/>
    <property type="chains" value="y=1-63"/>
</dbReference>
<dbReference type="PDB" id="6WD3">
    <property type="method" value="EM"/>
    <property type="resolution" value="3.60 A"/>
    <property type="chains" value="y=1-63"/>
</dbReference>
<dbReference type="PDB" id="6WD4">
    <property type="method" value="EM"/>
    <property type="resolution" value="3.70 A"/>
    <property type="chains" value="y=1-63"/>
</dbReference>
<dbReference type="PDB" id="6WD5">
    <property type="method" value="EM"/>
    <property type="resolution" value="3.60 A"/>
    <property type="chains" value="y=1-63"/>
</dbReference>
<dbReference type="PDB" id="6WD6">
    <property type="method" value="EM"/>
    <property type="resolution" value="3.70 A"/>
    <property type="chains" value="y=1-63"/>
</dbReference>
<dbReference type="PDB" id="6WD7">
    <property type="method" value="EM"/>
    <property type="resolution" value="3.90 A"/>
    <property type="chains" value="y=1-63"/>
</dbReference>
<dbReference type="PDB" id="6WD8">
    <property type="method" value="EM"/>
    <property type="resolution" value="3.70 A"/>
    <property type="chains" value="y=1-63"/>
</dbReference>
<dbReference type="PDB" id="6WD9">
    <property type="method" value="EM"/>
    <property type="resolution" value="3.70 A"/>
    <property type="chains" value="y=1-63"/>
</dbReference>
<dbReference type="PDB" id="6WDA">
    <property type="method" value="EM"/>
    <property type="resolution" value="3.80 A"/>
    <property type="chains" value="y=1-63"/>
</dbReference>
<dbReference type="PDB" id="6WDB">
    <property type="method" value="EM"/>
    <property type="resolution" value="4.00 A"/>
    <property type="chains" value="y=1-63"/>
</dbReference>
<dbReference type="PDB" id="6WDC">
    <property type="method" value="EM"/>
    <property type="resolution" value="4.20 A"/>
    <property type="chains" value="y=1-63"/>
</dbReference>
<dbReference type="PDB" id="6WDD">
    <property type="method" value="EM"/>
    <property type="resolution" value="3.20 A"/>
    <property type="chains" value="y=1-63"/>
</dbReference>
<dbReference type="PDB" id="6WDE">
    <property type="method" value="EM"/>
    <property type="resolution" value="3.00 A"/>
    <property type="chains" value="y=1-63"/>
</dbReference>
<dbReference type="PDB" id="6WDF">
    <property type="method" value="EM"/>
    <property type="resolution" value="3.30 A"/>
    <property type="chains" value="y=1-63"/>
</dbReference>
<dbReference type="PDB" id="6WDG">
    <property type="method" value="EM"/>
    <property type="resolution" value="3.30 A"/>
    <property type="chains" value="y=1-63"/>
</dbReference>
<dbReference type="PDB" id="6WDH">
    <property type="method" value="EM"/>
    <property type="resolution" value="4.30 A"/>
    <property type="chains" value="y=1-63"/>
</dbReference>
<dbReference type="PDB" id="6WDI">
    <property type="method" value="EM"/>
    <property type="resolution" value="4.00 A"/>
    <property type="chains" value="y=1-63"/>
</dbReference>
<dbReference type="PDB" id="6WDJ">
    <property type="method" value="EM"/>
    <property type="resolution" value="3.70 A"/>
    <property type="chains" value="y=1-63"/>
</dbReference>
<dbReference type="PDB" id="6WDK">
    <property type="method" value="EM"/>
    <property type="resolution" value="3.60 A"/>
    <property type="chains" value="y=1-63"/>
</dbReference>
<dbReference type="PDB" id="6WDL">
    <property type="method" value="EM"/>
    <property type="resolution" value="3.70 A"/>
    <property type="chains" value="y=1-63"/>
</dbReference>
<dbReference type="PDB" id="6WDM">
    <property type="method" value="EM"/>
    <property type="resolution" value="3.60 A"/>
    <property type="chains" value="y=1-63"/>
</dbReference>
<dbReference type="PDB" id="6WNT">
    <property type="method" value="EM"/>
    <property type="resolution" value="3.10 A"/>
    <property type="chains" value="y=1-63"/>
</dbReference>
<dbReference type="PDB" id="6WNV">
    <property type="method" value="EM"/>
    <property type="resolution" value="3.50 A"/>
    <property type="chains" value="y=1-63"/>
</dbReference>
<dbReference type="PDB" id="6WNW">
    <property type="method" value="EM"/>
    <property type="resolution" value="3.20 A"/>
    <property type="chains" value="y=1-63"/>
</dbReference>
<dbReference type="PDB" id="6X6T">
    <property type="method" value="EM"/>
    <property type="resolution" value="3.20 A"/>
    <property type="chains" value="e=1-63"/>
</dbReference>
<dbReference type="PDB" id="6X7F">
    <property type="method" value="EM"/>
    <property type="resolution" value="3.50 A"/>
    <property type="chains" value="e=1-63"/>
</dbReference>
<dbReference type="PDB" id="6X7K">
    <property type="method" value="EM"/>
    <property type="resolution" value="3.10 A"/>
    <property type="chains" value="e=1-63"/>
</dbReference>
<dbReference type="PDB" id="6X9Q">
    <property type="method" value="EM"/>
    <property type="resolution" value="4.80 A"/>
    <property type="chains" value="e=1-63"/>
</dbReference>
<dbReference type="PDB" id="6XDQ">
    <property type="method" value="EM"/>
    <property type="resolution" value="3.70 A"/>
    <property type="chains" value="e=1-63"/>
</dbReference>
<dbReference type="PDB" id="6XDR">
    <property type="method" value="EM"/>
    <property type="resolution" value="4.70 A"/>
    <property type="chains" value="e=1-63"/>
</dbReference>
<dbReference type="PDB" id="6XGF">
    <property type="method" value="EM"/>
    <property type="resolution" value="5.00 A"/>
    <property type="chains" value="e=1-63"/>
</dbReference>
<dbReference type="PDB" id="6XII">
    <property type="method" value="EM"/>
    <property type="resolution" value="7.00 A"/>
    <property type="chains" value="e=1-63"/>
</dbReference>
<dbReference type="PDB" id="6XIJ">
    <property type="method" value="EM"/>
    <property type="resolution" value="8.00 A"/>
    <property type="chains" value="e=1-63"/>
</dbReference>
<dbReference type="PDB" id="6XZ7">
    <property type="method" value="EM"/>
    <property type="resolution" value="2.10 A"/>
    <property type="chains" value="Y=2-63"/>
</dbReference>
<dbReference type="PDB" id="6XZA">
    <property type="method" value="EM"/>
    <property type="resolution" value="2.66 A"/>
    <property type="chains" value="Y2=2-63"/>
</dbReference>
<dbReference type="PDB" id="6XZB">
    <property type="method" value="EM"/>
    <property type="resolution" value="2.54 A"/>
    <property type="chains" value="Y2=2-63"/>
</dbReference>
<dbReference type="PDB" id="6Y69">
    <property type="method" value="EM"/>
    <property type="resolution" value="2.86 A"/>
    <property type="chains" value="Y=1-63"/>
</dbReference>
<dbReference type="PDB" id="6YS3">
    <property type="method" value="EM"/>
    <property type="resolution" value="2.58 A"/>
    <property type="chains" value="1=1-63"/>
</dbReference>
<dbReference type="PDB" id="6YSR">
    <property type="method" value="EM"/>
    <property type="resolution" value="3.10 A"/>
    <property type="chains" value="Y=1-63"/>
</dbReference>
<dbReference type="PDB" id="6YSS">
    <property type="method" value="EM"/>
    <property type="resolution" value="2.60 A"/>
    <property type="chains" value="Y=1-63"/>
</dbReference>
<dbReference type="PDB" id="6YST">
    <property type="method" value="EM"/>
    <property type="resolution" value="3.20 A"/>
    <property type="chains" value="Y=1-63"/>
</dbReference>
<dbReference type="PDB" id="6YSU">
    <property type="method" value="EM"/>
    <property type="resolution" value="3.70 A"/>
    <property type="chains" value="Y=1-63"/>
</dbReference>
<dbReference type="PDB" id="6ZTJ">
    <property type="method" value="EM"/>
    <property type="resolution" value="3.40 A"/>
    <property type="chains" value="BZ=1-63"/>
</dbReference>
<dbReference type="PDB" id="6ZTL">
    <property type="method" value="EM"/>
    <property type="resolution" value="3.50 A"/>
    <property type="chains" value="BZ=1-63"/>
</dbReference>
<dbReference type="PDB" id="6ZTM">
    <property type="method" value="EM"/>
    <property type="resolution" value="3.30 A"/>
    <property type="chains" value="BZ=1-63"/>
</dbReference>
<dbReference type="PDB" id="6ZTN">
    <property type="method" value="EM"/>
    <property type="resolution" value="3.90 A"/>
    <property type="chains" value="BZ=1-63"/>
</dbReference>
<dbReference type="PDB" id="6ZTO">
    <property type="method" value="EM"/>
    <property type="resolution" value="3.00 A"/>
    <property type="chains" value="BZ=1-63"/>
</dbReference>
<dbReference type="PDB" id="6ZTP">
    <property type="method" value="EM"/>
    <property type="resolution" value="3.00 A"/>
    <property type="chains" value="BZ=1-63"/>
</dbReference>
<dbReference type="PDB" id="6ZU1">
    <property type="method" value="EM"/>
    <property type="resolution" value="3.00 A"/>
    <property type="chains" value="BZ=1-63"/>
</dbReference>
<dbReference type="PDB" id="7ABZ">
    <property type="method" value="EM"/>
    <property type="resolution" value="3.21 A"/>
    <property type="chains" value="Y=2-63"/>
</dbReference>
<dbReference type="PDB" id="7AC7">
    <property type="method" value="EM"/>
    <property type="resolution" value="3.08 A"/>
    <property type="chains" value="Y=3-60"/>
</dbReference>
<dbReference type="PDB" id="7ACJ">
    <property type="method" value="EM"/>
    <property type="resolution" value="3.20 A"/>
    <property type="chains" value="Y=2-63"/>
</dbReference>
<dbReference type="PDB" id="7ACR">
    <property type="method" value="EM"/>
    <property type="resolution" value="3.44 A"/>
    <property type="chains" value="Y=2-63"/>
</dbReference>
<dbReference type="PDB" id="7B5K">
    <property type="method" value="EM"/>
    <property type="resolution" value="2.90 A"/>
    <property type="chains" value="Y=2-63"/>
</dbReference>
<dbReference type="PDB" id="7BL2">
    <property type="method" value="EM"/>
    <property type="resolution" value="3.70 A"/>
    <property type="chains" value="Y=1-63"/>
</dbReference>
<dbReference type="PDB" id="7BL3">
    <property type="method" value="EM"/>
    <property type="resolution" value="3.50 A"/>
    <property type="chains" value="Y=1-63"/>
</dbReference>
<dbReference type="PDB" id="7BL4">
    <property type="method" value="EM"/>
    <property type="resolution" value="2.40 A"/>
    <property type="chains" value="Y=1-63"/>
</dbReference>
<dbReference type="PDB" id="7BL5">
    <property type="method" value="EM"/>
    <property type="resolution" value="3.30 A"/>
    <property type="chains" value="Y=1-63"/>
</dbReference>
<dbReference type="PDB" id="7BL6">
    <property type="method" value="EM"/>
    <property type="resolution" value="4.00 A"/>
    <property type="chains" value="Y=1-63"/>
</dbReference>
<dbReference type="PDB" id="7BV8">
    <property type="method" value="EM"/>
    <property type="resolution" value="3.14 A"/>
    <property type="chains" value="Z=1-63"/>
</dbReference>
<dbReference type="PDB" id="7D6Z">
    <property type="method" value="EM"/>
    <property type="resolution" value="3.40 A"/>
    <property type="chains" value="Y=1-63"/>
</dbReference>
<dbReference type="PDB" id="7D80">
    <property type="method" value="EM"/>
    <property type="resolution" value="4.10 A"/>
    <property type="chains" value="w=1-63"/>
</dbReference>
<dbReference type="PDB" id="7JSS">
    <property type="method" value="EM"/>
    <property type="resolution" value="3.70 A"/>
    <property type="chains" value="y=1-63"/>
</dbReference>
<dbReference type="PDB" id="7JSW">
    <property type="method" value="EM"/>
    <property type="resolution" value="3.80 A"/>
    <property type="chains" value="y=1-63"/>
</dbReference>
<dbReference type="PDB" id="7JSZ">
    <property type="method" value="EM"/>
    <property type="resolution" value="3.70 A"/>
    <property type="chains" value="y=1-63"/>
</dbReference>
<dbReference type="PDB" id="7JT1">
    <property type="method" value="EM"/>
    <property type="resolution" value="3.30 A"/>
    <property type="chains" value="y=1-63"/>
</dbReference>
<dbReference type="PDB" id="7JT2">
    <property type="method" value="EM"/>
    <property type="resolution" value="3.50 A"/>
    <property type="chains" value="y=1-63"/>
</dbReference>
<dbReference type="PDB" id="7JT3">
    <property type="method" value="EM"/>
    <property type="resolution" value="3.70 A"/>
    <property type="chains" value="y=1-63"/>
</dbReference>
<dbReference type="PDB" id="7K00">
    <property type="method" value="EM"/>
    <property type="resolution" value="1.98 A"/>
    <property type="chains" value="x=1-63"/>
</dbReference>
<dbReference type="PDB" id="7K50">
    <property type="method" value="EM"/>
    <property type="resolution" value="3.40 A"/>
    <property type="chains" value="y=1-63"/>
</dbReference>
<dbReference type="PDB" id="7K51">
    <property type="method" value="EM"/>
    <property type="resolution" value="3.50 A"/>
    <property type="chains" value="y=1-63"/>
</dbReference>
<dbReference type="PDB" id="7K52">
    <property type="method" value="EM"/>
    <property type="resolution" value="3.40 A"/>
    <property type="chains" value="y=1-63"/>
</dbReference>
<dbReference type="PDB" id="7K53">
    <property type="method" value="EM"/>
    <property type="resolution" value="3.20 A"/>
    <property type="chains" value="y=1-63"/>
</dbReference>
<dbReference type="PDB" id="7K54">
    <property type="method" value="EM"/>
    <property type="resolution" value="3.20 A"/>
    <property type="chains" value="y=1-63"/>
</dbReference>
<dbReference type="PDB" id="7K55">
    <property type="method" value="EM"/>
    <property type="resolution" value="3.30 A"/>
    <property type="chains" value="y=1-63"/>
</dbReference>
<dbReference type="PDB" id="7LV0">
    <property type="method" value="EM"/>
    <property type="resolution" value="3.20 A"/>
    <property type="chains" value="y=1-63"/>
</dbReference>
<dbReference type="PDB" id="7LVK">
    <property type="method" value="EM"/>
    <property type="resolution" value="2.20 A"/>
    <property type="chains" value="g=1-63"/>
</dbReference>
<dbReference type="PDB" id="7M5D">
    <property type="method" value="EM"/>
    <property type="resolution" value="2.80 A"/>
    <property type="chains" value="Y=2-63"/>
</dbReference>
<dbReference type="PDB" id="7N1P">
    <property type="method" value="EM"/>
    <property type="resolution" value="2.33 A"/>
    <property type="chains" value="Lc=1-63"/>
</dbReference>
<dbReference type="PDB" id="7N2C">
    <property type="method" value="EM"/>
    <property type="resolution" value="2.72 A"/>
    <property type="chains" value="Lc=1-63"/>
</dbReference>
<dbReference type="PDB" id="7N2U">
    <property type="method" value="EM"/>
    <property type="resolution" value="2.53 A"/>
    <property type="chains" value="Lc=1-63"/>
</dbReference>
<dbReference type="PDB" id="7N2V">
    <property type="method" value="EM"/>
    <property type="resolution" value="2.54 A"/>
    <property type="chains" value="Lc=1-63"/>
</dbReference>
<dbReference type="PDB" id="7N30">
    <property type="method" value="EM"/>
    <property type="resolution" value="2.66 A"/>
    <property type="chains" value="Lc=1-63"/>
</dbReference>
<dbReference type="PDB" id="7N31">
    <property type="method" value="EM"/>
    <property type="resolution" value="2.69 A"/>
    <property type="chains" value="Lc=1-63"/>
</dbReference>
<dbReference type="PDB" id="7NBU">
    <property type="method" value="EM"/>
    <property type="resolution" value="3.11 A"/>
    <property type="chains" value="x=2-63"/>
</dbReference>
<dbReference type="PDB" id="7NSO">
    <property type="method" value="EM"/>
    <property type="resolution" value="2.90 A"/>
    <property type="chains" value="Y=1-63"/>
</dbReference>
<dbReference type="PDB" id="7NSP">
    <property type="method" value="EM"/>
    <property type="resolution" value="3.50 A"/>
    <property type="chains" value="Y=1-63"/>
</dbReference>
<dbReference type="PDB" id="7NSQ">
    <property type="method" value="EM"/>
    <property type="resolution" value="3.10 A"/>
    <property type="chains" value="Y=1-63"/>
</dbReference>
<dbReference type="PDB" id="7NWT">
    <property type="method" value="EM"/>
    <property type="resolution" value="2.66 A"/>
    <property type="chains" value="Y=1-63"/>
</dbReference>
<dbReference type="PDB" id="7O19">
    <property type="method" value="EM"/>
    <property type="resolution" value="2.90 A"/>
    <property type="chains" value="BY=1-63"/>
</dbReference>
<dbReference type="PDB" id="7O1A">
    <property type="method" value="EM"/>
    <property type="resolution" value="2.40 A"/>
    <property type="chains" value="BY=1-63"/>
</dbReference>
<dbReference type="PDB" id="7O1C">
    <property type="method" value="EM"/>
    <property type="resolution" value="2.60 A"/>
    <property type="chains" value="BY=1-63"/>
</dbReference>
<dbReference type="PDB" id="7ODE">
    <property type="method" value="EM"/>
    <property type="resolution" value="2.84 A"/>
    <property type="chains" value="g=1-63"/>
</dbReference>
<dbReference type="PDB" id="7OIZ">
    <property type="method" value="EM"/>
    <property type="resolution" value="2.90 A"/>
    <property type="chains" value="x=1-63"/>
</dbReference>
<dbReference type="PDB" id="7OJ0">
    <property type="method" value="EM"/>
    <property type="resolution" value="3.50 A"/>
    <property type="chains" value="x=1-63"/>
</dbReference>
<dbReference type="PDB" id="7P3K">
    <property type="method" value="EM"/>
    <property type="resolution" value="2.90 A"/>
    <property type="chains" value="x=1-63"/>
</dbReference>
<dbReference type="PDB" id="7PJS">
    <property type="method" value="EM"/>
    <property type="resolution" value="2.35 A"/>
    <property type="chains" value="Y=1-63"/>
</dbReference>
<dbReference type="PDB" id="7PJT">
    <property type="method" value="EM"/>
    <property type="resolution" value="6.00 A"/>
    <property type="chains" value="Y=1-63"/>
</dbReference>
<dbReference type="PDB" id="7PJU">
    <property type="method" value="EM"/>
    <property type="resolution" value="9.50 A"/>
    <property type="chains" value="Y=1-63"/>
</dbReference>
<dbReference type="PDB" id="7PJV">
    <property type="method" value="EM"/>
    <property type="resolution" value="3.10 A"/>
    <property type="chains" value="Y=1-63"/>
</dbReference>
<dbReference type="PDB" id="7PJW">
    <property type="method" value="EM"/>
    <property type="resolution" value="4.00 A"/>
    <property type="chains" value="Y=1-63"/>
</dbReference>
<dbReference type="PDB" id="7PJX">
    <property type="method" value="EM"/>
    <property type="resolution" value="6.50 A"/>
    <property type="chains" value="Y=1-63"/>
</dbReference>
<dbReference type="PDB" id="7PJY">
    <property type="method" value="EM"/>
    <property type="resolution" value="3.10 A"/>
    <property type="chains" value="Y=1-63"/>
</dbReference>
<dbReference type="PDB" id="7PJZ">
    <property type="method" value="EM"/>
    <property type="resolution" value="6.00 A"/>
    <property type="chains" value="Y=1-63"/>
</dbReference>
<dbReference type="PDB" id="7Q4K">
    <property type="method" value="EM"/>
    <property type="resolution" value="3.00 A"/>
    <property type="chains" value="BY=1-63"/>
</dbReference>
<dbReference type="PDB" id="7QG8">
    <property type="method" value="EM"/>
    <property type="resolution" value="3.97 A"/>
    <property type="chains" value="l=1-63"/>
</dbReference>
<dbReference type="PDB" id="7QGH">
    <property type="method" value="EM"/>
    <property type="resolution" value="4.48 A"/>
    <property type="chains" value="l=1-63"/>
</dbReference>
<dbReference type="PDB" id="7QGN">
    <property type="method" value="EM"/>
    <property type="resolution" value="3.37 A"/>
    <property type="chains" value="l=1-63"/>
</dbReference>
<dbReference type="PDB" id="7QGR">
    <property type="method" value="EM"/>
    <property type="resolution" value="5.70 A"/>
    <property type="chains" value="l=1-63"/>
</dbReference>
<dbReference type="PDB" id="7QQ3">
    <property type="method" value="EM"/>
    <property type="resolution" value="2.10 A"/>
    <property type="chains" value="g=1-63"/>
</dbReference>
<dbReference type="PDB" id="7S1G">
    <property type="method" value="EM"/>
    <property type="resolution" value="2.48 A"/>
    <property type="chains" value="g=1-63"/>
</dbReference>
<dbReference type="PDB" id="7S1H">
    <property type="method" value="EM"/>
    <property type="resolution" value="2.35 A"/>
    <property type="chains" value="g=1-63"/>
</dbReference>
<dbReference type="PDB" id="7S1I">
    <property type="method" value="EM"/>
    <property type="resolution" value="2.48 A"/>
    <property type="chains" value="g=1-63"/>
</dbReference>
<dbReference type="PDB" id="7S1J">
    <property type="method" value="EM"/>
    <property type="resolution" value="2.47 A"/>
    <property type="chains" value="g=1-63"/>
</dbReference>
<dbReference type="PDB" id="7S1K">
    <property type="method" value="EM"/>
    <property type="resolution" value="2.42 A"/>
    <property type="chains" value="g=1-63"/>
</dbReference>
<dbReference type="PDB" id="7SA4">
    <property type="method" value="EM"/>
    <property type="resolution" value="2.55 A"/>
    <property type="chains" value="Y=1-63"/>
</dbReference>
<dbReference type="PDB" id="7SS9">
    <property type="method" value="EM"/>
    <property type="resolution" value="3.90 A"/>
    <property type="chains" value="y=1-63"/>
</dbReference>
<dbReference type="PDB" id="7SSD">
    <property type="method" value="EM"/>
    <property type="resolution" value="3.30 A"/>
    <property type="chains" value="y=1-63"/>
</dbReference>
<dbReference type="PDB" id="7SSL">
    <property type="method" value="EM"/>
    <property type="resolution" value="3.80 A"/>
    <property type="chains" value="y=1-63"/>
</dbReference>
<dbReference type="PDB" id="7SSN">
    <property type="method" value="EM"/>
    <property type="resolution" value="3.20 A"/>
    <property type="chains" value="y=1-63"/>
</dbReference>
<dbReference type="PDB" id="7SSO">
    <property type="method" value="EM"/>
    <property type="resolution" value="3.20 A"/>
    <property type="chains" value="y=1-63"/>
</dbReference>
<dbReference type="PDB" id="7SSW">
    <property type="method" value="EM"/>
    <property type="resolution" value="3.80 A"/>
    <property type="chains" value="y=1-63"/>
</dbReference>
<dbReference type="PDB" id="7ST2">
    <property type="method" value="EM"/>
    <property type="resolution" value="2.90 A"/>
    <property type="chains" value="y=1-63"/>
</dbReference>
<dbReference type="PDB" id="7ST6">
    <property type="method" value="EM"/>
    <property type="resolution" value="3.00 A"/>
    <property type="chains" value="y=1-63"/>
</dbReference>
<dbReference type="PDB" id="7ST7">
    <property type="method" value="EM"/>
    <property type="resolution" value="3.20 A"/>
    <property type="chains" value="y=1-63"/>
</dbReference>
<dbReference type="PDB" id="7TOS">
    <property type="method" value="EM"/>
    <property type="resolution" value="2.90 A"/>
    <property type="chains" value="L29=1-63"/>
</dbReference>
<dbReference type="PDB" id="7UG7">
    <property type="method" value="EM"/>
    <property type="resolution" value="2.58 A"/>
    <property type="chains" value="Lc=1-63"/>
</dbReference>
<dbReference type="PDB" id="7UPH">
    <property type="method" value="EM"/>
    <property type="resolution" value="4.18 A"/>
    <property type="chains" value="x=2-63"/>
</dbReference>
<dbReference type="PDB" id="7Y7C">
    <property type="method" value="EM"/>
    <property type="resolution" value="2.51 A"/>
    <property type="chains" value="x=1-63"/>
</dbReference>
<dbReference type="PDB" id="7Y7D">
    <property type="method" value="EM"/>
    <property type="resolution" value="2.58 A"/>
    <property type="chains" value="x=1-63"/>
</dbReference>
<dbReference type="PDB" id="7Y7E">
    <property type="method" value="EM"/>
    <property type="resolution" value="2.41 A"/>
    <property type="chains" value="x=1-63"/>
</dbReference>
<dbReference type="PDB" id="7Y7F">
    <property type="method" value="EM"/>
    <property type="resolution" value="2.43 A"/>
    <property type="chains" value="x=1-63"/>
</dbReference>
<dbReference type="PDB" id="7Y7G">
    <property type="method" value="EM"/>
    <property type="resolution" value="2.34 A"/>
    <property type="chains" value="x=1-63"/>
</dbReference>
<dbReference type="PDB" id="7Y7H">
    <property type="method" value="EM"/>
    <property type="resolution" value="2.51 A"/>
    <property type="chains" value="x=1-63"/>
</dbReference>
<dbReference type="PDB" id="7YLA">
    <property type="method" value="EM"/>
    <property type="resolution" value="2.52 A"/>
    <property type="chains" value="g=2-63"/>
</dbReference>
<dbReference type="PDB" id="7Z20">
    <property type="method" value="EM"/>
    <property type="resolution" value="2.29 A"/>
    <property type="chains" value="1=1-63"/>
</dbReference>
<dbReference type="PDB" id="7ZOD">
    <property type="method" value="EM"/>
    <property type="resolution" value="2.56 A"/>
    <property type="chains" value="1=1-63"/>
</dbReference>
<dbReference type="PDB" id="7ZP8">
    <property type="method" value="EM"/>
    <property type="resolution" value="2.20 A"/>
    <property type="chains" value="1=1-63"/>
</dbReference>
<dbReference type="PDB" id="7ZQ5">
    <property type="method" value="EM"/>
    <property type="resolution" value="2.70 A"/>
    <property type="chains" value="1=1-63"/>
</dbReference>
<dbReference type="PDB" id="7ZQ6">
    <property type="method" value="EM"/>
    <property type="resolution" value="2.75 A"/>
    <property type="chains" value="1=1-63"/>
</dbReference>
<dbReference type="PDB" id="7ZTA">
    <property type="method" value="EM"/>
    <property type="resolution" value="2.70 A"/>
    <property type="chains" value="L291=2-63"/>
</dbReference>
<dbReference type="PDB" id="8A3L">
    <property type="method" value="EM"/>
    <property type="resolution" value="3.42 A"/>
    <property type="chains" value="x=1-63"/>
</dbReference>
<dbReference type="PDB" id="8AKN">
    <property type="method" value="EM"/>
    <property type="resolution" value="2.30 A"/>
    <property type="chains" value="x=1-63"/>
</dbReference>
<dbReference type="PDB" id="8AM9">
    <property type="method" value="EM"/>
    <property type="resolution" value="2.80 A"/>
    <property type="chains" value="x=1-63"/>
</dbReference>
<dbReference type="PDB" id="8ANA">
    <property type="method" value="EM"/>
    <property type="resolution" value="2.00 A"/>
    <property type="chains" value="x=1-63"/>
</dbReference>
<dbReference type="PDB" id="8AP4">
    <property type="method" value="EM"/>
    <property type="resolution" value="3.00 A"/>
    <property type="chains" value="x=1-63"/>
</dbReference>
<dbReference type="PDB" id="8AYE">
    <property type="method" value="EM"/>
    <property type="resolution" value="1.96 A"/>
    <property type="chains" value="x=1-63"/>
</dbReference>
<dbReference type="PDB" id="8B0X">
    <property type="method" value="EM"/>
    <property type="resolution" value="1.55 A"/>
    <property type="chains" value="x=1-63"/>
</dbReference>
<dbReference type="PDB" id="8B7Y">
    <property type="method" value="EM"/>
    <property type="resolution" value="3.00 A"/>
    <property type="chains" value="g=1-63"/>
</dbReference>
<dbReference type="PDB" id="8BF7">
    <property type="method" value="EM"/>
    <property type="resolution" value="2.33 A"/>
    <property type="chains" value="V=1-63"/>
</dbReference>
<dbReference type="PDB" id="8BGE">
    <property type="method" value="EM"/>
    <property type="resolution" value="2.11 A"/>
    <property type="chains" value="V=1-63"/>
</dbReference>
<dbReference type="PDB" id="8BGH">
    <property type="method" value="EM"/>
    <property type="resolution" value="2.88 A"/>
    <property type="chains" value="V=1-63"/>
</dbReference>
<dbReference type="PDB" id="8BH4">
    <property type="method" value="EM"/>
    <property type="resolution" value="2.62 A"/>
    <property type="chains" value="V=1-63"/>
</dbReference>
<dbReference type="PDB" id="8BHJ">
    <property type="method" value="EM"/>
    <property type="resolution" value="2.81 A"/>
    <property type="chains" value="V=1-63"/>
</dbReference>
<dbReference type="PDB" id="8BHL">
    <property type="method" value="EM"/>
    <property type="resolution" value="2.21 A"/>
    <property type="chains" value="V=1-63"/>
</dbReference>
<dbReference type="PDB" id="8BHN">
    <property type="method" value="EM"/>
    <property type="resolution" value="2.85 A"/>
    <property type="chains" value="V=1-63"/>
</dbReference>
<dbReference type="PDB" id="8BHP">
    <property type="method" value="EM"/>
    <property type="resolution" value="2.37 A"/>
    <property type="chains" value="V=1-63"/>
</dbReference>
<dbReference type="PDB" id="8BIL">
    <property type="method" value="EM"/>
    <property type="resolution" value="2.04 A"/>
    <property type="chains" value="V=1-63"/>
</dbReference>
<dbReference type="PDB" id="8BIM">
    <property type="method" value="EM"/>
    <property type="resolution" value="2.04 A"/>
    <property type="chains" value="V=1-63"/>
</dbReference>
<dbReference type="PDB" id="8C8X">
    <property type="method" value="EM"/>
    <property type="resolution" value="3.93 A"/>
    <property type="chains" value="Y=1-63"/>
</dbReference>
<dbReference type="PDB" id="8C8Y">
    <property type="method" value="EM"/>
    <property type="resolution" value="3.03 A"/>
    <property type="chains" value="Y=1-63"/>
</dbReference>
<dbReference type="PDB" id="8C8Z">
    <property type="method" value="EM"/>
    <property type="resolution" value="3.12 A"/>
    <property type="chains" value="Y=1-63"/>
</dbReference>
<dbReference type="PDB" id="8C90">
    <property type="method" value="EM"/>
    <property type="resolution" value="3.15 A"/>
    <property type="chains" value="Y=1-63"/>
</dbReference>
<dbReference type="PDB" id="8C91">
    <property type="method" value="EM"/>
    <property type="resolution" value="4.19 A"/>
    <property type="chains" value="Y=1-63"/>
</dbReference>
<dbReference type="PDB" id="8C92">
    <property type="method" value="EM"/>
    <property type="resolution" value="3.79 A"/>
    <property type="chains" value="Y=1-63"/>
</dbReference>
<dbReference type="PDB" id="8C93">
    <property type="method" value="EM"/>
    <property type="resolution" value="4.17 A"/>
    <property type="chains" value="Y=1-63"/>
</dbReference>
<dbReference type="PDB" id="8C94">
    <property type="method" value="EM"/>
    <property type="resolution" value="3.80 A"/>
    <property type="chains" value="Y=1-63"/>
</dbReference>
<dbReference type="PDB" id="8C95">
    <property type="method" value="EM"/>
    <property type="resolution" value="4.92 A"/>
    <property type="chains" value="Y=1-63"/>
</dbReference>
<dbReference type="PDB" id="8C96">
    <property type="method" value="EM"/>
    <property type="resolution" value="4.43 A"/>
    <property type="chains" value="Y=1-63"/>
</dbReference>
<dbReference type="PDB" id="8C97">
    <property type="method" value="EM"/>
    <property type="resolution" value="4.07 A"/>
    <property type="chains" value="Y=1-63"/>
</dbReference>
<dbReference type="PDB" id="8C98">
    <property type="method" value="EM"/>
    <property type="resolution" value="3.66 A"/>
    <property type="chains" value="Y=1-63"/>
</dbReference>
<dbReference type="PDB" id="8C99">
    <property type="method" value="EM"/>
    <property type="resolution" value="3.29 A"/>
    <property type="chains" value="Y=1-63"/>
</dbReference>
<dbReference type="PDB" id="8C9A">
    <property type="method" value="EM"/>
    <property type="resolution" value="4.86 A"/>
    <property type="chains" value="Y=1-63"/>
</dbReference>
<dbReference type="PDB" id="8C9B">
    <property type="method" value="EM"/>
    <property type="resolution" value="5.90 A"/>
    <property type="chains" value="Y=1-63"/>
</dbReference>
<dbReference type="PDB" id="8C9C">
    <property type="method" value="EM"/>
    <property type="resolution" value="6.62 A"/>
    <property type="chains" value="Y=1-63"/>
</dbReference>
<dbReference type="PDB" id="8CAM">
    <property type="method" value="EM"/>
    <property type="resolution" value="1.86 A"/>
    <property type="chains" value="x=1-63"/>
</dbReference>
<dbReference type="PDB" id="8CEU">
    <property type="method" value="EM"/>
    <property type="resolution" value="1.83 A"/>
    <property type="chains" value="x=1-63"/>
</dbReference>
<dbReference type="PDB" id="8CGD">
    <property type="method" value="EM"/>
    <property type="resolution" value="1.98 A"/>
    <property type="chains" value="x=1-63"/>
</dbReference>
<dbReference type="PDB" id="8CGK">
    <property type="method" value="EM"/>
    <property type="resolution" value="1.64 A"/>
    <property type="chains" value="x=1-63"/>
</dbReference>
<dbReference type="PDB" id="8CGV">
    <property type="method" value="EM"/>
    <property type="resolution" value="1.66 A"/>
    <property type="chains" value="x=1-63"/>
</dbReference>
<dbReference type="PDB" id="8EIU">
    <property type="method" value="EM"/>
    <property type="resolution" value="2.24 A"/>
    <property type="chains" value="x=1-63"/>
</dbReference>
<dbReference type="PDB" id="8EKC">
    <property type="method" value="EM"/>
    <property type="resolution" value="2.70 A"/>
    <property type="chains" value="1=1-63"/>
</dbReference>
<dbReference type="PDB" id="8EMM">
    <property type="method" value="EM"/>
    <property type="resolution" value="2.10 A"/>
    <property type="chains" value="x=1-63"/>
</dbReference>
<dbReference type="PDB" id="8FIZ">
    <property type="method" value="EM"/>
    <property type="resolution" value="3.80 A"/>
    <property type="chains" value="DF=1-63"/>
</dbReference>
<dbReference type="PDB" id="8FTO">
    <property type="method" value="EM"/>
    <property type="resolution" value="1.85 A"/>
    <property type="chains" value="x=1-63"/>
</dbReference>
<dbReference type="PDB" id="8FZD">
    <property type="method" value="EM"/>
    <property type="resolution" value="3.10 A"/>
    <property type="chains" value="1=1-63"/>
</dbReference>
<dbReference type="PDB" id="8FZE">
    <property type="method" value="EM"/>
    <property type="resolution" value="3.00 A"/>
    <property type="chains" value="1=1-63"/>
</dbReference>
<dbReference type="PDB" id="8FZF">
    <property type="method" value="EM"/>
    <property type="resolution" value="3.20 A"/>
    <property type="chains" value="1=1-63"/>
</dbReference>
<dbReference type="PDB" id="8FZG">
    <property type="method" value="EM"/>
    <property type="resolution" value="3.10 A"/>
    <property type="chains" value="1=1-63"/>
</dbReference>
<dbReference type="PDB" id="8FZH">
    <property type="method" value="EM"/>
    <property type="resolution" value="2.90 A"/>
    <property type="chains" value="1=1-63"/>
</dbReference>
<dbReference type="PDB" id="8FZI">
    <property type="method" value="EM"/>
    <property type="resolution" value="3.10 A"/>
    <property type="chains" value="1=1-63"/>
</dbReference>
<dbReference type="PDB" id="8FZJ">
    <property type="method" value="EM"/>
    <property type="resolution" value="3.00 A"/>
    <property type="chains" value="1=1-63"/>
</dbReference>
<dbReference type="PDB" id="8G2U">
    <property type="method" value="EM"/>
    <property type="resolution" value="3.00 A"/>
    <property type="chains" value="Y=1-63"/>
</dbReference>
<dbReference type="PDB" id="8G31">
    <property type="method" value="EM"/>
    <property type="resolution" value="3.20 A"/>
    <property type="chains" value="Y=1-63"/>
</dbReference>
<dbReference type="PDB" id="8G34">
    <property type="method" value="EM"/>
    <property type="resolution" value="3.20 A"/>
    <property type="chains" value="Y=1-63"/>
</dbReference>
<dbReference type="PDB" id="8G38">
    <property type="method" value="EM"/>
    <property type="resolution" value="3.20 A"/>
    <property type="chains" value="Y=1-63"/>
</dbReference>
<dbReference type="PDB" id="8G6W">
    <property type="method" value="EM"/>
    <property type="resolution" value="2.02 A"/>
    <property type="chains" value="x=1-63"/>
</dbReference>
<dbReference type="PDB" id="8G6X">
    <property type="method" value="EM"/>
    <property type="resolution" value="2.31 A"/>
    <property type="chains" value="x=1-63"/>
</dbReference>
<dbReference type="PDB" id="8G6Y">
    <property type="method" value="EM"/>
    <property type="resolution" value="2.09 A"/>
    <property type="chains" value="x=1-63"/>
</dbReference>
<dbReference type="PDB" id="8G7P">
    <property type="method" value="EM"/>
    <property type="resolution" value="2.90 A"/>
    <property type="chains" value="1=1-63"/>
</dbReference>
<dbReference type="PDB" id="8G7Q">
    <property type="method" value="EM"/>
    <property type="resolution" value="3.10 A"/>
    <property type="chains" value="1=1-63"/>
</dbReference>
<dbReference type="PDB" id="8G7R">
    <property type="method" value="EM"/>
    <property type="resolution" value="2.80 A"/>
    <property type="chains" value="1=1-63"/>
</dbReference>
<dbReference type="PDB" id="8G7S">
    <property type="method" value="EM"/>
    <property type="resolution" value="3.10 A"/>
    <property type="chains" value="1=1-63"/>
</dbReference>
<dbReference type="PDB" id="8HSP">
    <property type="method" value="EM"/>
    <property type="resolution" value="2.32 A"/>
    <property type="chains" value="x=1-63"/>
</dbReference>
<dbReference type="PDB" id="8HTZ">
    <property type="method" value="EM"/>
    <property type="resolution" value="2.40 A"/>
    <property type="chains" value="x=1-63"/>
</dbReference>
<dbReference type="PDB" id="8HU1">
    <property type="method" value="EM"/>
    <property type="resolution" value="2.69 A"/>
    <property type="chains" value="x=1-63"/>
</dbReference>
<dbReference type="PDB" id="8IFB">
    <property type="method" value="EM"/>
    <property type="resolution" value="2.43 A"/>
    <property type="chains" value="x=1-63"/>
</dbReference>
<dbReference type="PDB" id="8IFC">
    <property type="method" value="EM"/>
    <property type="resolution" value="2.90 A"/>
    <property type="chains" value="x=1-63"/>
</dbReference>
<dbReference type="PDB" id="8J1Z">
    <property type="method" value="EM"/>
    <property type="resolution" value="2.60 A"/>
    <property type="chains" value="x=1-63"/>
</dbReference>
<dbReference type="PDB" id="8P16">
    <property type="method" value="EM"/>
    <property type="resolution" value="2.77 A"/>
    <property type="chains" value="Y=1-63"/>
</dbReference>
<dbReference type="PDB" id="8P17">
    <property type="method" value="EM"/>
    <property type="resolution" value="2.78 A"/>
    <property type="chains" value="Y=1-63"/>
</dbReference>
<dbReference type="PDB" id="8P18">
    <property type="method" value="EM"/>
    <property type="resolution" value="2.77 A"/>
    <property type="chains" value="Y=1-63"/>
</dbReference>
<dbReference type="PDB" id="8PEG">
    <property type="method" value="EM"/>
    <property type="resolution" value="3.30 A"/>
    <property type="chains" value="2=1-63"/>
</dbReference>
<dbReference type="PDB" id="8PHJ">
    <property type="method" value="EM"/>
    <property type="resolution" value="3.67 A"/>
    <property type="chains" value="x=1-63"/>
</dbReference>
<dbReference type="PDB" id="8PKL">
    <property type="method" value="EM"/>
    <property type="resolution" value="3.09 A"/>
    <property type="chains" value="2=1-63"/>
</dbReference>
<dbReference type="PDB" id="8PVA">
    <property type="method" value="EM"/>
    <property type="resolution" value="4.50 A"/>
    <property type="chains" value="x=1-63"/>
</dbReference>
<dbReference type="PDB" id="8Q4F">
    <property type="method" value="EM"/>
    <property type="resolution" value="3.10 A"/>
    <property type="chains" value="x=1-63"/>
</dbReference>
<dbReference type="PDB" id="8QBT">
    <property type="method" value="EM"/>
    <property type="resolution" value="2.20 A"/>
    <property type="chains" value="Y=1-63"/>
</dbReference>
<dbReference type="PDB" id="8QK7">
    <property type="method" value="EM"/>
    <property type="resolution" value="2.77 A"/>
    <property type="chains" value="Y=1-63"/>
</dbReference>
<dbReference type="PDB" id="8QOA">
    <property type="method" value="EM"/>
    <property type="resolution" value="2.00 A"/>
    <property type="chains" value="x=1-63"/>
</dbReference>
<dbReference type="PDB" id="8R6C">
    <property type="method" value="EM"/>
    <property type="resolution" value="2.20 A"/>
    <property type="chains" value="x=1-63"/>
</dbReference>
<dbReference type="PDB" id="8R8M">
    <property type="method" value="EM"/>
    <property type="resolution" value="2.40 A"/>
    <property type="chains" value="x=1-63"/>
</dbReference>
<dbReference type="PDB" id="8RPY">
    <property type="method" value="EM"/>
    <property type="resolution" value="2.64 A"/>
    <property type="chains" value="Y=1-63"/>
</dbReference>
<dbReference type="PDB" id="8RPZ">
    <property type="method" value="EM"/>
    <property type="resolution" value="2.44 A"/>
    <property type="chains" value="Y=1-63"/>
</dbReference>
<dbReference type="PDB" id="8RQ0">
    <property type="method" value="EM"/>
    <property type="resolution" value="2.44 A"/>
    <property type="chains" value="Y=1-63"/>
</dbReference>
<dbReference type="PDB" id="8RQ2">
    <property type="method" value="EM"/>
    <property type="resolution" value="2.44 A"/>
    <property type="chains" value="Y=1-63"/>
</dbReference>
<dbReference type="PDB" id="8SYL">
    <property type="method" value="EM"/>
    <property type="resolution" value="2.90 A"/>
    <property type="chains" value="1=1-63"/>
</dbReference>
<dbReference type="PDB" id="8T5D">
    <property type="method" value="EM"/>
    <property type="resolution" value="3.20 A"/>
    <property type="chains" value="Y=1-63"/>
</dbReference>
<dbReference type="PDB" id="8T5H">
    <property type="method" value="EM"/>
    <property type="resolution" value="3.30 A"/>
    <property type="chains" value="Y=1-63"/>
</dbReference>
<dbReference type="PDB" id="8URY">
    <property type="method" value="EM"/>
    <property type="resolution" value="3.10 A"/>
    <property type="chains" value="e=2-63"/>
</dbReference>
<dbReference type="PDB" id="8VS9">
    <property type="method" value="EM"/>
    <property type="resolution" value="3.90 A"/>
    <property type="chains" value="L29=1-63"/>
</dbReference>
<dbReference type="PDB" id="8VSA">
    <property type="method" value="EM"/>
    <property type="resolution" value="3.70 A"/>
    <property type="chains" value="L29=1-63"/>
</dbReference>
<dbReference type="PDB" id="8W51">
    <property type="method" value="EM"/>
    <property type="resolution" value="2.40 A"/>
    <property type="chains" value="Z=1-63"/>
</dbReference>
<dbReference type="PDB" id="8YUO">
    <property type="method" value="EM"/>
    <property type="resolution" value="2.25 A"/>
    <property type="chains" value="x=1-63"/>
</dbReference>
<dbReference type="PDB" id="8YUP">
    <property type="method" value="EM"/>
    <property type="resolution" value="2.39 A"/>
    <property type="chains" value="x=1-63"/>
</dbReference>
<dbReference type="PDB" id="8YUQ">
    <property type="method" value="EM"/>
    <property type="resolution" value="2.41 A"/>
    <property type="chains" value="x=1-63"/>
</dbReference>
<dbReference type="PDB" id="8YUR">
    <property type="method" value="EM"/>
    <property type="resolution" value="2.47 A"/>
    <property type="chains" value="x=1-63"/>
</dbReference>
<dbReference type="PDB" id="8YUS">
    <property type="method" value="EM"/>
    <property type="resolution" value="2.43 A"/>
    <property type="chains" value="x=1-63"/>
</dbReference>
<dbReference type="PDB" id="9CL9">
    <property type="method" value="EM"/>
    <property type="resolution" value="5.04 A"/>
    <property type="chains" value="Y=1-60"/>
</dbReference>
<dbReference type="PDB" id="9D89">
    <property type="method" value="EM"/>
    <property type="resolution" value="1.95 A"/>
    <property type="chains" value="x=2-63"/>
</dbReference>
<dbReference type="PDB" id="9FBV">
    <property type="method" value="EM"/>
    <property type="resolution" value="2.40 A"/>
    <property type="chains" value="x=1-63"/>
</dbReference>
<dbReference type="PDB" id="9GFT">
    <property type="method" value="EM"/>
    <property type="resolution" value="3.10 A"/>
    <property type="chains" value="At/l=1-63"/>
</dbReference>
<dbReference type="PDB" id="9GGR">
    <property type="method" value="EM"/>
    <property type="resolution" value="3.20 A"/>
    <property type="chains" value="At/l=1-63"/>
</dbReference>
<dbReference type="PDB" id="9H3M">
    <property type="method" value="EM"/>
    <property type="resolution" value="4.41 A"/>
    <property type="chains" value="Y=1-63"/>
</dbReference>
<dbReference type="PDB" id="9H3N">
    <property type="method" value="EM"/>
    <property type="resolution" value="3.69 A"/>
    <property type="chains" value="Y=1-63"/>
</dbReference>
<dbReference type="PDB" id="9H3O">
    <property type="method" value="EM"/>
    <property type="resolution" value="4.54 A"/>
    <property type="chains" value="Y=1-63"/>
</dbReference>
<dbReference type="PDB" id="9H3P">
    <property type="method" value="EM"/>
    <property type="resolution" value="7.06 A"/>
    <property type="chains" value="Y=1-63"/>
</dbReference>
<dbReference type="PDB" id="9H3Q">
    <property type="method" value="EM"/>
    <property type="resolution" value="4.02 A"/>
    <property type="chains" value="Y=1-63"/>
</dbReference>
<dbReference type="PDB" id="9H3R">
    <property type="method" value="EM"/>
    <property type="resolution" value="4.12 A"/>
    <property type="chains" value="Y=1-63"/>
</dbReference>
<dbReference type="PDB" id="9H3S">
    <property type="method" value="EM"/>
    <property type="resolution" value="4.16 A"/>
    <property type="chains" value="Y=1-63"/>
</dbReference>
<dbReference type="PDB" id="9H3T">
    <property type="method" value="EM"/>
    <property type="resolution" value="3.85 A"/>
    <property type="chains" value="Y=1-63"/>
</dbReference>
<dbReference type="PDB" id="9H3U">
    <property type="method" value="EM"/>
    <property type="resolution" value="3.47 A"/>
    <property type="chains" value="Y=1-63"/>
</dbReference>
<dbReference type="PDB" id="9H3V">
    <property type="method" value="EM"/>
    <property type="resolution" value="3.55 A"/>
    <property type="chains" value="Y=1-63"/>
</dbReference>
<dbReference type="PDB" id="9H3W">
    <property type="method" value="EM"/>
    <property type="resolution" value="5.38 A"/>
    <property type="chains" value="Y=1-63"/>
</dbReference>
<dbReference type="PDB" id="9H3X">
    <property type="method" value="EM"/>
    <property type="resolution" value="4.12 A"/>
    <property type="chains" value="Y=1-63"/>
</dbReference>
<dbReference type="PDB" id="9H3Y">
    <property type="method" value="EM"/>
    <property type="resolution" value="3.09 A"/>
    <property type="chains" value="Y=1-63"/>
</dbReference>
<dbReference type="PDB" id="9H3Z">
    <property type="method" value="EM"/>
    <property type="resolution" value="2.98 A"/>
    <property type="chains" value="Y=1-63"/>
</dbReference>
<dbReference type="PDB" id="9HA1">
    <property type="method" value="EM"/>
    <property type="resolution" value="4.17 A"/>
    <property type="chains" value="Y=1-63"/>
</dbReference>
<dbReference type="PDB" id="9HA2">
    <property type="method" value="EM"/>
    <property type="resolution" value="4.17 A"/>
    <property type="chains" value="Y=1-63"/>
</dbReference>
<dbReference type="PDB" id="9HA3">
    <property type="method" value="EM"/>
    <property type="resolution" value="3.62 A"/>
    <property type="chains" value="Y=1-63"/>
</dbReference>
<dbReference type="PDB" id="9HA4">
    <property type="method" value="EM"/>
    <property type="resolution" value="4.26 A"/>
    <property type="chains" value="Y=1-63"/>
</dbReference>
<dbReference type="PDB" id="9HA5">
    <property type="method" value="EM"/>
    <property type="resolution" value="3.30 A"/>
    <property type="chains" value="Y=1-63"/>
</dbReference>
<dbReference type="PDB" id="9HA6">
    <property type="method" value="EM"/>
    <property type="resolution" value="3.08 A"/>
    <property type="chains" value="Y=1-63"/>
</dbReference>
<dbReference type="PDB" id="9HA7">
    <property type="method" value="EM"/>
    <property type="resolution" value="4.37 A"/>
    <property type="chains" value="Y=1-63"/>
</dbReference>
<dbReference type="PDB" id="9HAI">
    <property type="method" value="EM"/>
    <property type="resolution" value="3.01 A"/>
    <property type="chains" value="Y=1-63"/>
</dbReference>
<dbReference type="PDB" id="9MOR">
    <property type="method" value="EM"/>
    <property type="resolution" value="2.65 A"/>
    <property type="chains" value="Y=1-63"/>
</dbReference>
<dbReference type="PDB" id="9MQ4">
    <property type="method" value="EM"/>
    <property type="resolution" value="2.78 A"/>
    <property type="chains" value="Y=1-63"/>
</dbReference>
<dbReference type="PDBsum" id="1ML5"/>
<dbReference type="PDBsum" id="2J28"/>
<dbReference type="PDBsum" id="2RDO"/>
<dbReference type="PDBsum" id="2VRH"/>
<dbReference type="PDBsum" id="3BBX"/>
<dbReference type="PDBsum" id="3IY9"/>
<dbReference type="PDBsum" id="3J45"/>
<dbReference type="PDBsum" id="3J46"/>
<dbReference type="PDBsum" id="3J5L"/>
<dbReference type="PDBsum" id="3J7Z"/>
<dbReference type="PDBsum" id="3J8G"/>
<dbReference type="PDBsum" id="3J9Y"/>
<dbReference type="PDBsum" id="3J9Z"/>
<dbReference type="PDBsum" id="3JA1"/>
<dbReference type="PDBsum" id="3JBU"/>
<dbReference type="PDBsum" id="3JBV"/>
<dbReference type="PDBsum" id="3JCD"/>
<dbReference type="PDBsum" id="3JCE"/>
<dbReference type="PDBsum" id="3JCJ"/>
<dbReference type="PDBsum" id="3JCN"/>
<dbReference type="PDBsum" id="4CSU"/>
<dbReference type="PDBsum" id="4U1U"/>
<dbReference type="PDBsum" id="4U1V"/>
<dbReference type="PDBsum" id="4U20"/>
<dbReference type="PDBsum" id="4U24"/>
<dbReference type="PDBsum" id="4U25"/>
<dbReference type="PDBsum" id="4U26"/>
<dbReference type="PDBsum" id="4U27"/>
<dbReference type="PDBsum" id="4UY8"/>
<dbReference type="PDBsum" id="4V47"/>
<dbReference type="PDBsum" id="4V48"/>
<dbReference type="PDBsum" id="4V4H"/>
<dbReference type="PDBsum" id="4V4Q"/>
<dbReference type="PDBsum" id="4V4V"/>
<dbReference type="PDBsum" id="4V4W"/>
<dbReference type="PDBsum" id="4V50"/>
<dbReference type="PDBsum" id="4V52"/>
<dbReference type="PDBsum" id="4V53"/>
<dbReference type="PDBsum" id="4V54"/>
<dbReference type="PDBsum" id="4V55"/>
<dbReference type="PDBsum" id="4V56"/>
<dbReference type="PDBsum" id="4V57"/>
<dbReference type="PDBsum" id="4V5B"/>
<dbReference type="PDBsum" id="4V5H"/>
<dbReference type="PDBsum" id="4V5Y"/>
<dbReference type="PDBsum" id="4V64"/>
<dbReference type="PDBsum" id="4V65"/>
<dbReference type="PDBsum" id="4V66"/>
<dbReference type="PDBsum" id="4V69"/>
<dbReference type="PDBsum" id="4V6C"/>
<dbReference type="PDBsum" id="4V6D"/>
<dbReference type="PDBsum" id="4V6E"/>
<dbReference type="PDBsum" id="4V6K"/>
<dbReference type="PDBsum" id="4V6L"/>
<dbReference type="PDBsum" id="4V6M"/>
<dbReference type="PDBsum" id="4V6N"/>
<dbReference type="PDBsum" id="4V6O"/>
<dbReference type="PDBsum" id="4V6P"/>
<dbReference type="PDBsum" id="4V6Q"/>
<dbReference type="PDBsum" id="4V6R"/>
<dbReference type="PDBsum" id="4V6S"/>
<dbReference type="PDBsum" id="4V6T"/>
<dbReference type="PDBsum" id="4V6V"/>
<dbReference type="PDBsum" id="4V6Y"/>
<dbReference type="PDBsum" id="4V6Z"/>
<dbReference type="PDBsum" id="4V70"/>
<dbReference type="PDBsum" id="4V71"/>
<dbReference type="PDBsum" id="4V72"/>
<dbReference type="PDBsum" id="4V73"/>
<dbReference type="PDBsum" id="4V74"/>
<dbReference type="PDBsum" id="4V75"/>
<dbReference type="PDBsum" id="4V76"/>
<dbReference type="PDBsum" id="4V77"/>
<dbReference type="PDBsum" id="4V78"/>
<dbReference type="PDBsum" id="4V79"/>
<dbReference type="PDBsum" id="4V7A"/>
<dbReference type="PDBsum" id="4V7B"/>
<dbReference type="PDBsum" id="4V7C"/>
<dbReference type="PDBsum" id="4V7D"/>
<dbReference type="PDBsum" id="4V7I"/>
<dbReference type="PDBsum" id="4V7S"/>
<dbReference type="PDBsum" id="4V7T"/>
<dbReference type="PDBsum" id="4V7U"/>
<dbReference type="PDBsum" id="4V7V"/>
<dbReference type="PDBsum" id="4V85"/>
<dbReference type="PDBsum" id="4V89"/>
<dbReference type="PDBsum" id="4V9C"/>
<dbReference type="PDBsum" id="4V9D"/>
<dbReference type="PDBsum" id="4V9O"/>
<dbReference type="PDBsum" id="4V9P"/>
<dbReference type="PDBsum" id="4WF1"/>
<dbReference type="PDBsum" id="4WOI"/>
<dbReference type="PDBsum" id="4WWW"/>
<dbReference type="PDBsum" id="4YBB"/>
<dbReference type="PDBsum" id="5ADY"/>
<dbReference type="PDBsum" id="5AFI"/>
<dbReference type="PDBsum" id="5AKA"/>
<dbReference type="PDBsum" id="5GAD"/>
<dbReference type="PDBsum" id="5GAE"/>
<dbReference type="PDBsum" id="5GAF"/>
<dbReference type="PDBsum" id="5GAG"/>
<dbReference type="PDBsum" id="5GAH"/>
<dbReference type="PDBsum" id="5H5U"/>
<dbReference type="PDBsum" id="5IQR"/>
<dbReference type="PDBsum" id="5IT8"/>
<dbReference type="PDBsum" id="5J5B"/>
<dbReference type="PDBsum" id="5J7L"/>
<dbReference type="PDBsum" id="5J88"/>
<dbReference type="PDBsum" id="5J8A"/>
<dbReference type="PDBsum" id="5J91"/>
<dbReference type="PDBsum" id="5JC9"/>
<dbReference type="PDBsum" id="5JTE"/>
<dbReference type="PDBsum" id="5JU8"/>
<dbReference type="PDBsum" id="5KCR"/>
<dbReference type="PDBsum" id="5KCS"/>
<dbReference type="PDBsum" id="5KPS"/>
<dbReference type="PDBsum" id="5KPV"/>
<dbReference type="PDBsum" id="5KPW"/>
<dbReference type="PDBsum" id="5KPX"/>
<dbReference type="PDBsum" id="5L3P"/>
<dbReference type="PDBsum" id="5LZA"/>
<dbReference type="PDBsum" id="5LZB"/>
<dbReference type="PDBsum" id="5LZC"/>
<dbReference type="PDBsum" id="5LZD"/>
<dbReference type="PDBsum" id="5LZE"/>
<dbReference type="PDBsum" id="5LZF"/>
<dbReference type="PDBsum" id="5MDV"/>
<dbReference type="PDBsum" id="5MDW"/>
<dbReference type="PDBsum" id="5MDY"/>
<dbReference type="PDBsum" id="5MDZ"/>
<dbReference type="PDBsum" id="5MGP"/>
<dbReference type="PDBsum" id="5NCO"/>
<dbReference type="PDBsum" id="5NP6"/>
<dbReference type="PDBsum" id="5NWY"/>
<dbReference type="PDBsum" id="5O2R"/>
<dbReference type="PDBsum" id="5U4I"/>
<dbReference type="PDBsum" id="5U9F"/>
<dbReference type="PDBsum" id="5U9G"/>
<dbReference type="PDBsum" id="5UYK"/>
<dbReference type="PDBsum" id="5UYL"/>
<dbReference type="PDBsum" id="5UYM"/>
<dbReference type="PDBsum" id="5UYN"/>
<dbReference type="PDBsum" id="5UYP"/>
<dbReference type="PDBsum" id="5UYQ"/>
<dbReference type="PDBsum" id="5WDT"/>
<dbReference type="PDBsum" id="5WE4"/>
<dbReference type="PDBsum" id="5WE6"/>
<dbReference type="PDBsum" id="5WF0"/>
<dbReference type="PDBsum" id="5WFK"/>
<dbReference type="PDBsum" id="5WFS"/>
<dbReference type="PDBsum" id="6BU8"/>
<dbReference type="PDBsum" id="6BY1"/>
<dbReference type="PDBsum" id="6C4I"/>
<dbReference type="PDBsum" id="6DNC"/>
<dbReference type="PDBsum" id="6ENF"/>
<dbReference type="PDBsum" id="6ENJ"/>
<dbReference type="PDBsum" id="6ENU"/>
<dbReference type="PDBsum" id="6GBZ"/>
<dbReference type="PDBsum" id="6GC0"/>
<dbReference type="PDBsum" id="6GC4"/>
<dbReference type="PDBsum" id="6GC6"/>
<dbReference type="PDBsum" id="6GC7"/>
<dbReference type="PDBsum" id="6GC8"/>
<dbReference type="PDBsum" id="6GWT"/>
<dbReference type="PDBsum" id="6GXM"/>
<dbReference type="PDBsum" id="6GXN"/>
<dbReference type="PDBsum" id="6GXO"/>
<dbReference type="PDBsum" id="6GXP"/>
<dbReference type="PDBsum" id="6H4N"/>
<dbReference type="PDBsum" id="6H58"/>
<dbReference type="PDBsum" id="6HRM"/>
<dbReference type="PDBsum" id="6I0Y"/>
<dbReference type="PDBsum" id="6I7V"/>
<dbReference type="PDBsum" id="6O9J"/>
<dbReference type="PDBsum" id="6O9K"/>
<dbReference type="PDBsum" id="6OFX"/>
<dbReference type="PDBsum" id="6OG7"/>
<dbReference type="PDBsum" id="6OGF"/>
<dbReference type="PDBsum" id="6OGG"/>
<dbReference type="PDBsum" id="6OGI"/>
<dbReference type="PDBsum" id="6OM6"/>
<dbReference type="PDBsum" id="6ORE"/>
<dbReference type="PDBsum" id="6ORL"/>
<dbReference type="PDBsum" id="6OSK"/>
<dbReference type="PDBsum" id="6OSQ"/>
<dbReference type="PDBsum" id="6OST"/>
<dbReference type="PDBsum" id="6OT3"/>
<dbReference type="PDBsum" id="6OUO"/>
<dbReference type="PDBsum" id="6PJ6"/>
<dbReference type="PDBsum" id="6Q98"/>
<dbReference type="PDBsum" id="6Q9A"/>
<dbReference type="PDBsum" id="6QDW"/>
<dbReference type="PDBsum" id="6QUL"/>
<dbReference type="PDBsum" id="6S0K"/>
<dbReference type="PDBsum" id="6SZS"/>
<dbReference type="PDBsum" id="6TBV"/>
<dbReference type="PDBsum" id="6TC3"/>
<dbReference type="PDBsum" id="6U48"/>
<dbReference type="PDBsum" id="6VU3"/>
<dbReference type="PDBsum" id="6VWL"/>
<dbReference type="PDBsum" id="6VWM"/>
<dbReference type="PDBsum" id="6VWN"/>
<dbReference type="PDBsum" id="6VYQ"/>
<dbReference type="PDBsum" id="6VYR"/>
<dbReference type="PDBsum" id="6VYS"/>
<dbReference type="PDBsum" id="6VYT"/>
<dbReference type="PDBsum" id="6VYU"/>
<dbReference type="PDBsum" id="6VYW"/>
<dbReference type="PDBsum" id="6VYX"/>
<dbReference type="PDBsum" id="6VYY"/>
<dbReference type="PDBsum" id="6VYZ"/>
<dbReference type="PDBsum" id="6VZ2"/>
<dbReference type="PDBsum" id="6VZ3"/>
<dbReference type="PDBsum" id="6VZ5"/>
<dbReference type="PDBsum" id="6VZ7"/>
<dbReference type="PDBsum" id="6VZJ"/>
<dbReference type="PDBsum" id="6WD0"/>
<dbReference type="PDBsum" id="6WD1"/>
<dbReference type="PDBsum" id="6WD2"/>
<dbReference type="PDBsum" id="6WD3"/>
<dbReference type="PDBsum" id="6WD4"/>
<dbReference type="PDBsum" id="6WD5"/>
<dbReference type="PDBsum" id="6WD6"/>
<dbReference type="PDBsum" id="6WD7"/>
<dbReference type="PDBsum" id="6WD8"/>
<dbReference type="PDBsum" id="6WD9"/>
<dbReference type="PDBsum" id="6WDA"/>
<dbReference type="PDBsum" id="6WDB"/>
<dbReference type="PDBsum" id="6WDC"/>
<dbReference type="PDBsum" id="6WDD"/>
<dbReference type="PDBsum" id="6WDE"/>
<dbReference type="PDBsum" id="6WDF"/>
<dbReference type="PDBsum" id="6WDG"/>
<dbReference type="PDBsum" id="6WDH"/>
<dbReference type="PDBsum" id="6WDI"/>
<dbReference type="PDBsum" id="6WDJ"/>
<dbReference type="PDBsum" id="6WDK"/>
<dbReference type="PDBsum" id="6WDL"/>
<dbReference type="PDBsum" id="6WDM"/>
<dbReference type="PDBsum" id="6WNT"/>
<dbReference type="PDBsum" id="6WNV"/>
<dbReference type="PDBsum" id="6WNW"/>
<dbReference type="PDBsum" id="6X6T"/>
<dbReference type="PDBsum" id="6X7F"/>
<dbReference type="PDBsum" id="6X7K"/>
<dbReference type="PDBsum" id="6X9Q"/>
<dbReference type="PDBsum" id="6XDQ"/>
<dbReference type="PDBsum" id="6XDR"/>
<dbReference type="PDBsum" id="6XGF"/>
<dbReference type="PDBsum" id="6XII"/>
<dbReference type="PDBsum" id="6XIJ"/>
<dbReference type="PDBsum" id="6XZ7"/>
<dbReference type="PDBsum" id="6XZA"/>
<dbReference type="PDBsum" id="6XZB"/>
<dbReference type="PDBsum" id="6Y69"/>
<dbReference type="PDBsum" id="6YS3"/>
<dbReference type="PDBsum" id="6YSR"/>
<dbReference type="PDBsum" id="6YSS"/>
<dbReference type="PDBsum" id="6YST"/>
<dbReference type="PDBsum" id="6YSU"/>
<dbReference type="PDBsum" id="6ZTJ"/>
<dbReference type="PDBsum" id="6ZTL"/>
<dbReference type="PDBsum" id="6ZTM"/>
<dbReference type="PDBsum" id="6ZTN"/>
<dbReference type="PDBsum" id="6ZTO"/>
<dbReference type="PDBsum" id="6ZTP"/>
<dbReference type="PDBsum" id="6ZU1"/>
<dbReference type="PDBsum" id="7ABZ"/>
<dbReference type="PDBsum" id="7AC7"/>
<dbReference type="PDBsum" id="7ACJ"/>
<dbReference type="PDBsum" id="7ACR"/>
<dbReference type="PDBsum" id="7B5K"/>
<dbReference type="PDBsum" id="7BL2"/>
<dbReference type="PDBsum" id="7BL3"/>
<dbReference type="PDBsum" id="7BL4"/>
<dbReference type="PDBsum" id="7BL5"/>
<dbReference type="PDBsum" id="7BL6"/>
<dbReference type="PDBsum" id="7BV8"/>
<dbReference type="PDBsum" id="7D6Z"/>
<dbReference type="PDBsum" id="7D80"/>
<dbReference type="PDBsum" id="7JSS"/>
<dbReference type="PDBsum" id="7JSW"/>
<dbReference type="PDBsum" id="7JSZ"/>
<dbReference type="PDBsum" id="7JT1"/>
<dbReference type="PDBsum" id="7JT2"/>
<dbReference type="PDBsum" id="7JT3"/>
<dbReference type="PDBsum" id="7K00"/>
<dbReference type="PDBsum" id="7K50"/>
<dbReference type="PDBsum" id="7K51"/>
<dbReference type="PDBsum" id="7K52"/>
<dbReference type="PDBsum" id="7K53"/>
<dbReference type="PDBsum" id="7K54"/>
<dbReference type="PDBsum" id="7K55"/>
<dbReference type="PDBsum" id="7LV0"/>
<dbReference type="PDBsum" id="7LVK"/>
<dbReference type="PDBsum" id="7M5D"/>
<dbReference type="PDBsum" id="7N1P"/>
<dbReference type="PDBsum" id="7N2C"/>
<dbReference type="PDBsum" id="7N2U"/>
<dbReference type="PDBsum" id="7N2V"/>
<dbReference type="PDBsum" id="7N30"/>
<dbReference type="PDBsum" id="7N31"/>
<dbReference type="PDBsum" id="7NBU"/>
<dbReference type="PDBsum" id="7NSO"/>
<dbReference type="PDBsum" id="7NSP"/>
<dbReference type="PDBsum" id="7NSQ"/>
<dbReference type="PDBsum" id="7NWT"/>
<dbReference type="PDBsum" id="7O19"/>
<dbReference type="PDBsum" id="7O1A"/>
<dbReference type="PDBsum" id="7O1C"/>
<dbReference type="PDBsum" id="7ODE"/>
<dbReference type="PDBsum" id="7OIZ"/>
<dbReference type="PDBsum" id="7OJ0"/>
<dbReference type="PDBsum" id="7P3K"/>
<dbReference type="PDBsum" id="7PJS"/>
<dbReference type="PDBsum" id="7PJT"/>
<dbReference type="PDBsum" id="7PJU"/>
<dbReference type="PDBsum" id="7PJV"/>
<dbReference type="PDBsum" id="7PJW"/>
<dbReference type="PDBsum" id="7PJX"/>
<dbReference type="PDBsum" id="7PJY"/>
<dbReference type="PDBsum" id="7PJZ"/>
<dbReference type="PDBsum" id="7Q4K"/>
<dbReference type="PDBsum" id="7QG8"/>
<dbReference type="PDBsum" id="7QGH"/>
<dbReference type="PDBsum" id="7QGN"/>
<dbReference type="PDBsum" id="7QGR"/>
<dbReference type="PDBsum" id="7QQ3"/>
<dbReference type="PDBsum" id="7S1G"/>
<dbReference type="PDBsum" id="7S1H"/>
<dbReference type="PDBsum" id="7S1I"/>
<dbReference type="PDBsum" id="7S1J"/>
<dbReference type="PDBsum" id="7S1K"/>
<dbReference type="PDBsum" id="7SA4"/>
<dbReference type="PDBsum" id="7SS9"/>
<dbReference type="PDBsum" id="7SSD"/>
<dbReference type="PDBsum" id="7SSL"/>
<dbReference type="PDBsum" id="7SSN"/>
<dbReference type="PDBsum" id="7SSO"/>
<dbReference type="PDBsum" id="7SSW"/>
<dbReference type="PDBsum" id="7ST2"/>
<dbReference type="PDBsum" id="7ST6"/>
<dbReference type="PDBsum" id="7ST7"/>
<dbReference type="PDBsum" id="7TOS"/>
<dbReference type="PDBsum" id="7UG7"/>
<dbReference type="PDBsum" id="7UPH"/>
<dbReference type="PDBsum" id="7Y7C"/>
<dbReference type="PDBsum" id="7Y7D"/>
<dbReference type="PDBsum" id="7Y7E"/>
<dbReference type="PDBsum" id="7Y7F"/>
<dbReference type="PDBsum" id="7Y7G"/>
<dbReference type="PDBsum" id="7Y7H"/>
<dbReference type="PDBsum" id="7YLA"/>
<dbReference type="PDBsum" id="7Z20"/>
<dbReference type="PDBsum" id="7ZOD"/>
<dbReference type="PDBsum" id="7ZP8"/>
<dbReference type="PDBsum" id="7ZQ5"/>
<dbReference type="PDBsum" id="7ZQ6"/>
<dbReference type="PDBsum" id="7ZTA"/>
<dbReference type="PDBsum" id="8A3L"/>
<dbReference type="PDBsum" id="8AKN"/>
<dbReference type="PDBsum" id="8AM9"/>
<dbReference type="PDBsum" id="8ANA"/>
<dbReference type="PDBsum" id="8AP4"/>
<dbReference type="PDBsum" id="8AYE"/>
<dbReference type="PDBsum" id="8B0X"/>
<dbReference type="PDBsum" id="8B7Y"/>
<dbReference type="PDBsum" id="8BF7"/>
<dbReference type="PDBsum" id="8BGE"/>
<dbReference type="PDBsum" id="8BGH"/>
<dbReference type="PDBsum" id="8BH4"/>
<dbReference type="PDBsum" id="8BHJ"/>
<dbReference type="PDBsum" id="8BHL"/>
<dbReference type="PDBsum" id="8BHN"/>
<dbReference type="PDBsum" id="8BHP"/>
<dbReference type="PDBsum" id="8BIL"/>
<dbReference type="PDBsum" id="8BIM"/>
<dbReference type="PDBsum" id="8C8X"/>
<dbReference type="PDBsum" id="8C8Y"/>
<dbReference type="PDBsum" id="8C8Z"/>
<dbReference type="PDBsum" id="8C90"/>
<dbReference type="PDBsum" id="8C91"/>
<dbReference type="PDBsum" id="8C92"/>
<dbReference type="PDBsum" id="8C93"/>
<dbReference type="PDBsum" id="8C94"/>
<dbReference type="PDBsum" id="8C95"/>
<dbReference type="PDBsum" id="8C96"/>
<dbReference type="PDBsum" id="8C97"/>
<dbReference type="PDBsum" id="8C98"/>
<dbReference type="PDBsum" id="8C99"/>
<dbReference type="PDBsum" id="8C9A"/>
<dbReference type="PDBsum" id="8C9B"/>
<dbReference type="PDBsum" id="8C9C"/>
<dbReference type="PDBsum" id="8CAM"/>
<dbReference type="PDBsum" id="8CEU"/>
<dbReference type="PDBsum" id="8CGD"/>
<dbReference type="PDBsum" id="8CGK"/>
<dbReference type="PDBsum" id="8CGV"/>
<dbReference type="PDBsum" id="8EIU"/>
<dbReference type="PDBsum" id="8EKC"/>
<dbReference type="PDBsum" id="8EMM"/>
<dbReference type="PDBsum" id="8FIZ"/>
<dbReference type="PDBsum" id="8FTO"/>
<dbReference type="PDBsum" id="8FZD"/>
<dbReference type="PDBsum" id="8FZE"/>
<dbReference type="PDBsum" id="8FZF"/>
<dbReference type="PDBsum" id="8FZG"/>
<dbReference type="PDBsum" id="8FZH"/>
<dbReference type="PDBsum" id="8FZI"/>
<dbReference type="PDBsum" id="8FZJ"/>
<dbReference type="PDBsum" id="8G2U"/>
<dbReference type="PDBsum" id="8G31"/>
<dbReference type="PDBsum" id="8G34"/>
<dbReference type="PDBsum" id="8G38"/>
<dbReference type="PDBsum" id="8G6W"/>
<dbReference type="PDBsum" id="8G6X"/>
<dbReference type="PDBsum" id="8G6Y"/>
<dbReference type="PDBsum" id="8G7P"/>
<dbReference type="PDBsum" id="8G7Q"/>
<dbReference type="PDBsum" id="8G7R"/>
<dbReference type="PDBsum" id="8G7S"/>
<dbReference type="PDBsum" id="8HSP"/>
<dbReference type="PDBsum" id="8HTZ"/>
<dbReference type="PDBsum" id="8HU1"/>
<dbReference type="PDBsum" id="8IFB"/>
<dbReference type="PDBsum" id="8IFC"/>
<dbReference type="PDBsum" id="8J1Z"/>
<dbReference type="PDBsum" id="8P16"/>
<dbReference type="PDBsum" id="8P17"/>
<dbReference type="PDBsum" id="8P18"/>
<dbReference type="PDBsum" id="8PEG"/>
<dbReference type="PDBsum" id="8PHJ"/>
<dbReference type="PDBsum" id="8PKL"/>
<dbReference type="PDBsum" id="8PVA"/>
<dbReference type="PDBsum" id="8Q4F"/>
<dbReference type="PDBsum" id="8QBT"/>
<dbReference type="PDBsum" id="8QK7"/>
<dbReference type="PDBsum" id="8QOA"/>
<dbReference type="PDBsum" id="8R6C"/>
<dbReference type="PDBsum" id="8R8M"/>
<dbReference type="PDBsum" id="8RPY"/>
<dbReference type="PDBsum" id="8RPZ"/>
<dbReference type="PDBsum" id="8RQ0"/>
<dbReference type="PDBsum" id="8RQ2"/>
<dbReference type="PDBsum" id="8SYL"/>
<dbReference type="PDBsum" id="8T5D"/>
<dbReference type="PDBsum" id="8T5H"/>
<dbReference type="PDBsum" id="8URY"/>
<dbReference type="PDBsum" id="8VS9"/>
<dbReference type="PDBsum" id="8VSA"/>
<dbReference type="PDBsum" id="8W51"/>
<dbReference type="PDBsum" id="8YUO"/>
<dbReference type="PDBsum" id="8YUP"/>
<dbReference type="PDBsum" id="8YUQ"/>
<dbReference type="PDBsum" id="8YUR"/>
<dbReference type="PDBsum" id="8YUS"/>
<dbReference type="PDBsum" id="9CL9"/>
<dbReference type="PDBsum" id="9D89"/>
<dbReference type="PDBsum" id="9FBV"/>
<dbReference type="PDBsum" id="9GFT"/>
<dbReference type="PDBsum" id="9GGR"/>
<dbReference type="PDBsum" id="9H3M"/>
<dbReference type="PDBsum" id="9H3N"/>
<dbReference type="PDBsum" id="9H3O"/>
<dbReference type="PDBsum" id="9H3P"/>
<dbReference type="PDBsum" id="9H3Q"/>
<dbReference type="PDBsum" id="9H3R"/>
<dbReference type="PDBsum" id="9H3S"/>
<dbReference type="PDBsum" id="9H3T"/>
<dbReference type="PDBsum" id="9H3U"/>
<dbReference type="PDBsum" id="9H3V"/>
<dbReference type="PDBsum" id="9H3W"/>
<dbReference type="PDBsum" id="9H3X"/>
<dbReference type="PDBsum" id="9H3Y"/>
<dbReference type="PDBsum" id="9H3Z"/>
<dbReference type="PDBsum" id="9HA1"/>
<dbReference type="PDBsum" id="9HA2"/>
<dbReference type="PDBsum" id="9HA3"/>
<dbReference type="PDBsum" id="9HA4"/>
<dbReference type="PDBsum" id="9HA5"/>
<dbReference type="PDBsum" id="9HA6"/>
<dbReference type="PDBsum" id="9HA7"/>
<dbReference type="PDBsum" id="9HAI"/>
<dbReference type="PDBsum" id="9MOR"/>
<dbReference type="PDBsum" id="9MQ4"/>
<dbReference type="EMDB" id="EMD-0076"/>
<dbReference type="EMDB" id="EMD-0080"/>
<dbReference type="EMDB" id="EMD-0081"/>
<dbReference type="EMDB" id="EMD-0082"/>
<dbReference type="EMDB" id="EMD-0083"/>
<dbReference type="EMDB" id="EMD-0137"/>
<dbReference type="EMDB" id="EMD-0139"/>
<dbReference type="EMDB" id="EMD-0261"/>
<dbReference type="EMDB" id="EMD-0322"/>
<dbReference type="EMDB" id="EMD-10073"/>
<dbReference type="EMDB" id="EMD-10353"/>
<dbReference type="EMDB" id="EMD-10453"/>
<dbReference type="EMDB" id="EMD-10458"/>
<dbReference type="EMDB" id="EMD-10655"/>
<dbReference type="EMDB" id="EMD-10656"/>
<dbReference type="EMDB" id="EMD-10657"/>
<dbReference type="EMDB" id="EMD-10705"/>
<dbReference type="EMDB" id="EMD-10905"/>
<dbReference type="EMDB" id="EMD-10906"/>
<dbReference type="EMDB" id="EMD-10907"/>
<dbReference type="EMDB" id="EMD-10908"/>
<dbReference type="EMDB" id="EMD-11418"/>
<dbReference type="EMDB" id="EMD-11419"/>
<dbReference type="EMDB" id="EMD-11420"/>
<dbReference type="EMDB" id="EMD-11421"/>
<dbReference type="EMDB" id="EMD-11422"/>
<dbReference type="EMDB" id="EMD-11423"/>
<dbReference type="EMDB" id="EMD-11426"/>
<dbReference type="EMDB" id="EMD-11710"/>
<dbReference type="EMDB" id="EMD-11713"/>
<dbReference type="EMDB" id="EMD-11717"/>
<dbReference type="EMDB" id="EMD-11718"/>
<dbReference type="EMDB" id="EMD-12035"/>
<dbReference type="EMDB" id="EMD-12215"/>
<dbReference type="EMDB" id="EMD-12216"/>
<dbReference type="EMDB" id="EMD-12217"/>
<dbReference type="EMDB" id="EMD-12218"/>
<dbReference type="EMDB" id="EMD-12219"/>
<dbReference type="EMDB" id="EMD-12261"/>
<dbReference type="EMDB" id="EMD-12573"/>
<dbReference type="EMDB" id="EMD-12574"/>
<dbReference type="EMDB" id="EMD-12575"/>
<dbReference type="EMDB" id="EMD-12635"/>
<dbReference type="EMDB" id="EMD-12693"/>
<dbReference type="EMDB" id="EMD-12694"/>
<dbReference type="EMDB" id="EMD-12695"/>
<dbReference type="EMDB" id="EMD-12826"/>
<dbReference type="EMDB" id="EMD-12936"/>
<dbReference type="EMDB" id="EMD-12937"/>
<dbReference type="EMDB" id="EMD-13180"/>
<dbReference type="EMDB" id="EMD-13458"/>
<dbReference type="EMDB" id="EMD-13459"/>
<dbReference type="EMDB" id="EMD-13461"/>
<dbReference type="EMDB" id="EMD-13462"/>
<dbReference type="EMDB" id="EMD-13463"/>
<dbReference type="EMDB" id="EMD-13464"/>
<dbReference type="EMDB" id="EMD-13465"/>
<dbReference type="EMDB" id="EMD-13805"/>
<dbReference type="EMDB" id="EMD-13952"/>
<dbReference type="EMDB" id="EMD-13955"/>
<dbReference type="EMDB" id="EMD-13956"/>
<dbReference type="EMDB" id="EMD-13958"/>
<dbReference type="EMDB" id="EMD-14121"/>
<dbReference type="EMDB" id="EMD-14454"/>
<dbReference type="EMDB" id="EMD-14846"/>
<dbReference type="EMDB" id="EMD-14850"/>
<dbReference type="EMDB" id="EMD-14864"/>
<dbReference type="EMDB" id="EMD-14865"/>
<dbReference type="EMDB" id="EMD-14956"/>
<dbReference type="EMDB" id="EMD-15116"/>
<dbReference type="EMDB" id="EMD-15533"/>
<dbReference type="EMDB" id="EMD-15558"/>
<dbReference type="EMDB" id="EMD-15712"/>
<dbReference type="EMDB" id="EMD-15793"/>
<dbReference type="EMDB" id="EMD-15905"/>
<dbReference type="EMDB" id="EMD-16015"/>
<dbReference type="EMDB" id="EMD-16029"/>
<dbReference type="EMDB" id="EMD-16031"/>
<dbReference type="EMDB" id="EMD-16047"/>
<dbReference type="EMDB" id="EMD-16057"/>
<dbReference type="EMDB" id="EMD-16059"/>
<dbReference type="EMDB" id="EMD-16062"/>
<dbReference type="EMDB" id="EMD-16065"/>
<dbReference type="EMDB" id="EMD-16081"/>
<dbReference type="EMDB" id="EMD-16082"/>
<dbReference type="EMDB" id="EMD-16494"/>
<dbReference type="EMDB" id="EMD-16495"/>
<dbReference type="EMDB" id="EMD-16496"/>
<dbReference type="EMDB" id="EMD-16497"/>
<dbReference type="EMDB" id="EMD-16498"/>
<dbReference type="EMDB" id="EMD-16499"/>
<dbReference type="EMDB" id="EMD-16500"/>
<dbReference type="EMDB" id="EMD-16501"/>
<dbReference type="EMDB" id="EMD-16502"/>
<dbReference type="EMDB" id="EMD-16503"/>
<dbReference type="EMDB" id="EMD-16504"/>
<dbReference type="EMDB" id="EMD-16505"/>
<dbReference type="EMDB" id="EMD-16506"/>
<dbReference type="EMDB" id="EMD-16507"/>
<dbReference type="EMDB" id="EMD-16508"/>
<dbReference type="EMDB" id="EMD-16509"/>
<dbReference type="EMDB" id="EMD-16530"/>
<dbReference type="EMDB" id="EMD-16613"/>
<dbReference type="EMDB" id="EMD-16641"/>
<dbReference type="EMDB" id="EMD-16646"/>
<dbReference type="EMDB" id="EMD-16652"/>
<dbReference type="EMDB" id="EMD-17346"/>
<dbReference type="EMDB" id="EMD-17347"/>
<dbReference type="EMDB" id="EMD-17348"/>
<dbReference type="EMDB" id="EMD-17631"/>
<dbReference type="EMDB" id="EMD-17667"/>
<dbReference type="EMDB" id="EMD-17743"/>
<dbReference type="EMDB" id="EMD-17959"/>
<dbReference type="EMDB" id="EMD-18145"/>
<dbReference type="EMDB" id="EMD-18320"/>
<dbReference type="EMDB" id="EMD-18458"/>
<dbReference type="EMDB" id="EMD-18534"/>
<dbReference type="EMDB" id="EMD-18950"/>
<dbReference type="EMDB" id="EMD-19004"/>
<dbReference type="EMDB" id="EMD-19426"/>
<dbReference type="EMDB" id="EMD-19427"/>
<dbReference type="EMDB" id="EMD-19428"/>
<dbReference type="EMDB" id="EMD-19429"/>
<dbReference type="EMDB" id="EMD-20048"/>
<dbReference type="EMDB" id="EMD-20052"/>
<dbReference type="EMDB" id="EMD-21420"/>
<dbReference type="EMDB" id="EMD-21421"/>
<dbReference type="EMDB" id="EMD-21422"/>
<dbReference type="EMDB" id="EMD-21625"/>
<dbReference type="EMDB" id="EMD-21630"/>
<dbReference type="EMDB" id="EMD-21631"/>
<dbReference type="EMDB" id="EMD-21632"/>
<dbReference type="EMDB" id="EMD-21633"/>
<dbReference type="EMDB" id="EMD-21634"/>
<dbReference type="EMDB" id="EMD-21635"/>
<dbReference type="EMDB" id="EMD-21636"/>
<dbReference type="EMDB" id="EMD-21637"/>
<dbReference type="EMDB" id="EMD-21638"/>
<dbReference type="EMDB" id="EMD-21639"/>
<dbReference type="EMDB" id="EMD-21640"/>
<dbReference type="EMDB" id="EMD-21641"/>
<dbReference type="EMDB" id="EMD-21856"/>
<dbReference type="EMDB" id="EMD-21857"/>
<dbReference type="EMDB" id="EMD-21858"/>
<dbReference type="EMDB" id="EMD-22459"/>
<dbReference type="EMDB" id="EMD-22461"/>
<dbReference type="EMDB" id="EMD-22464"/>
<dbReference type="EMDB" id="EMD-22466"/>
<dbReference type="EMDB" id="EMD-22469"/>
<dbReference type="EMDB" id="EMD-22472"/>
<dbReference type="EMDB" id="EMD-22669"/>
<dbReference type="EMDB" id="EMD-22670"/>
<dbReference type="EMDB" id="EMD-22671"/>
<dbReference type="EMDB" id="EMD-22672"/>
<dbReference type="EMDB" id="EMD-22673"/>
<dbReference type="EMDB" id="EMD-22674"/>
<dbReference type="EMDB" id="EMD-23528"/>
<dbReference type="EMDB" id="EMD-24120"/>
<dbReference type="EMDB" id="EMD-24132"/>
<dbReference type="EMDB" id="EMD-24133"/>
<dbReference type="EMDB" id="EMD-24134"/>
<dbReference type="EMDB" id="EMD-24135"/>
<dbReference type="EMDB" id="EMD-24136"/>
<dbReference type="EMDB" id="EMD-24803"/>
<dbReference type="EMDB" id="EMD-25405"/>
<dbReference type="EMDB" id="EMD-25407"/>
<dbReference type="EMDB" id="EMD-25409"/>
<dbReference type="EMDB" id="EMD-25410"/>
<dbReference type="EMDB" id="EMD-25411"/>
<dbReference type="EMDB" id="EMD-25415"/>
<dbReference type="EMDB" id="EMD-25418"/>
<dbReference type="EMDB" id="EMD-25420"/>
<dbReference type="EMDB" id="EMD-25421"/>
<dbReference type="EMDB" id="EMD-30215"/>
<dbReference type="EMDB" id="EMD-30598"/>
<dbReference type="EMDB" id="EMD-30611"/>
<dbReference type="EMDB" id="EMD-33660"/>
<dbReference type="EMDB" id="EMD-33661"/>
<dbReference type="EMDB" id="EMD-33662"/>
<dbReference type="EMDB" id="EMD-33663"/>
<dbReference type="EMDB" id="EMD-33664"/>
<dbReference type="EMDB" id="EMD-33665"/>
<dbReference type="EMDB" id="EMD-33904"/>
<dbReference type="EMDB" id="EMD-3489"/>
<dbReference type="EMDB" id="EMD-3490"/>
<dbReference type="EMDB" id="EMD-3492"/>
<dbReference type="EMDB" id="EMD-3493"/>
<dbReference type="EMDB" id="EMD-35001"/>
<dbReference type="EMDB" id="EMD-35020"/>
<dbReference type="EMDB" id="EMD-35022"/>
<dbReference type="EMDB" id="EMD-3508"/>
<dbReference type="EMDB" id="EMD-35411"/>
<dbReference type="EMDB" id="EMD-35412"/>
<dbReference type="EMDB" id="EMD-35939"/>
<dbReference type="EMDB" id="EMD-3617"/>
<dbReference type="EMDB" id="EMD-3713"/>
<dbReference type="EMDB" id="EMD-37271"/>
<dbReference type="EMDB" id="EMD-3730"/>
<dbReference type="EMDB" id="EMD-3898"/>
<dbReference type="EMDB" id="EMD-3899"/>
<dbReference type="EMDB" id="EMD-3903"/>
<dbReference type="EMDB" id="EMD-39577"/>
<dbReference type="EMDB" id="EMD-39578"/>
<dbReference type="EMDB" id="EMD-39579"/>
<dbReference type="EMDB" id="EMD-39580"/>
<dbReference type="EMDB" id="EMD-39581"/>
<dbReference type="EMDB" id="EMD-4001"/>
<dbReference type="EMDB" id="EMD-4121"/>
<dbReference type="EMDB" id="EMD-4122"/>
<dbReference type="EMDB" id="EMD-4123"/>
<dbReference type="EMDB" id="EMD-4124"/>
<dbReference type="EMDB" id="EMD-4125"/>
<dbReference type="EMDB" id="EMD-4126"/>
<dbReference type="EMDB" id="EMD-4378"/>
<dbReference type="EMDB" id="EMD-4379"/>
<dbReference type="EMDB" id="EMD-4380"/>
<dbReference type="EMDB" id="EMD-4381"/>
<dbReference type="EMDB" id="EMD-4382"/>
<dbReference type="EMDB" id="EMD-4383"/>
<dbReference type="EMDB" id="EMD-4477"/>
<dbReference type="EMDB" id="EMD-4478"/>
<dbReference type="EMDB" id="EMD-45666"/>
<dbReference type="EMDB" id="EMD-4638"/>
<dbReference type="EMDB" id="EMD-50296"/>
<dbReference type="EMDB" id="EMD-51318"/>
<dbReference type="EMDB" id="EMD-51340"/>
<dbReference type="EMDB" id="EMD-51830"/>
<dbReference type="EMDB" id="EMD-51831"/>
<dbReference type="EMDB" id="EMD-51832"/>
<dbReference type="EMDB" id="EMD-51833"/>
<dbReference type="EMDB" id="EMD-51834"/>
<dbReference type="EMDB" id="EMD-51835"/>
<dbReference type="EMDB" id="EMD-51836"/>
<dbReference type="EMDB" id="EMD-51837"/>
<dbReference type="EMDB" id="EMD-51838"/>
<dbReference type="EMDB" id="EMD-51839"/>
<dbReference type="EMDB" id="EMD-51840"/>
<dbReference type="EMDB" id="EMD-51841"/>
<dbReference type="EMDB" id="EMD-51842"/>
<dbReference type="EMDB" id="EMD-51843"/>
<dbReference type="EMDB" id="EMD-51973"/>
<dbReference type="EMDB" id="EMD-51974"/>
<dbReference type="EMDB" id="EMD-51975"/>
<dbReference type="EMDB" id="EMD-51976"/>
<dbReference type="EMDB" id="EMD-51977"/>
<dbReference type="EMDB" id="EMD-51978"/>
<dbReference type="EMDB" id="EMD-51979"/>
<dbReference type="EMDB" id="EMD-51981"/>
<dbReference type="EMDB" id="EMD-6667"/>
<dbReference type="EMDB" id="EMD-7289"/>
<dbReference type="EMDB" id="EMD-8000"/>
<dbReference type="EMDB" id="EMD-8001"/>
<dbReference type="EMDB" id="EMD-8002"/>
<dbReference type="EMDB" id="EMD-8003"/>
<dbReference type="EMDB" id="EMD-8004"/>
<dbReference type="EMDB" id="EMD-8107"/>
<dbReference type="EMDB" id="EMD-8175"/>
<dbReference type="EMDB" id="EMD-8176"/>
<dbReference type="EMDB" id="EMD-8237"/>
<dbReference type="EMDB" id="EMD-8238"/>
<dbReference type="EMDB" id="EMD-8279"/>
<dbReference type="EMDB" id="EMD-8280"/>
<dbReference type="EMDB" id="EMD-8281"/>
<dbReference type="EMDB" id="EMD-8282"/>
<dbReference type="EMDB" id="EMD-8505"/>
<dbReference type="EMDB" id="EMD-8615"/>
<dbReference type="EMDB" id="EMD-8616"/>
<dbReference type="EMDB" id="EMD-8617"/>
<dbReference type="EMDB" id="EMD-8618"/>
<dbReference type="EMDB" id="EMD-8619"/>
<dbReference type="EMDB" id="EMD-8620"/>
<dbReference type="EMDB" id="EMD-8813"/>
<dbReference type="EMDB" id="EMD-8814"/>
<dbReference type="EMDB" id="EMD-8815"/>
<dbReference type="EMDB" id="EMD-8828"/>
<dbReference type="SMR" id="P0A7M6"/>
<dbReference type="BioGRID" id="4263435">
    <property type="interactions" value="9"/>
</dbReference>
<dbReference type="BioGRID" id="852119">
    <property type="interactions" value="1"/>
</dbReference>
<dbReference type="ComplexPortal" id="CPX-3807">
    <property type="entry name" value="50S large ribosomal subunit"/>
</dbReference>
<dbReference type="DIP" id="DIP-47911N"/>
<dbReference type="FunCoup" id="P0A7M6">
    <property type="interactions" value="677"/>
</dbReference>
<dbReference type="IntAct" id="P0A7M6">
    <property type="interactions" value="48"/>
</dbReference>
<dbReference type="STRING" id="511145.b3312"/>
<dbReference type="jPOST" id="P0A7M6"/>
<dbReference type="PaxDb" id="511145-b3312"/>
<dbReference type="EnsemblBacteria" id="AAC76337">
    <property type="protein sequence ID" value="AAC76337"/>
    <property type="gene ID" value="b3312"/>
</dbReference>
<dbReference type="GeneID" id="93778675"/>
<dbReference type="GeneID" id="947807"/>
<dbReference type="KEGG" id="ecj:JW3274"/>
<dbReference type="KEGG" id="eco:b3312"/>
<dbReference type="KEGG" id="ecoc:C3026_18000"/>
<dbReference type="PATRIC" id="fig|1411691.4.peg.3419"/>
<dbReference type="EchoBASE" id="EB0880"/>
<dbReference type="eggNOG" id="COG0255">
    <property type="taxonomic scope" value="Bacteria"/>
</dbReference>
<dbReference type="HOGENOM" id="CLU_158491_1_2_6"/>
<dbReference type="InParanoid" id="P0A7M6"/>
<dbReference type="OMA" id="RFQMATS"/>
<dbReference type="OrthoDB" id="9815192at2"/>
<dbReference type="PhylomeDB" id="P0A7M6"/>
<dbReference type="BioCyc" id="EcoCyc:EG10887-MONOMER"/>
<dbReference type="BioCyc" id="MetaCyc:EG10887-MONOMER"/>
<dbReference type="EvolutionaryTrace" id="P0A7M6"/>
<dbReference type="PRO" id="PR:P0A7M6"/>
<dbReference type="Proteomes" id="UP000000625">
    <property type="component" value="Chromosome"/>
</dbReference>
<dbReference type="GO" id="GO:0005737">
    <property type="term" value="C:cytoplasm"/>
    <property type="evidence" value="ECO:0000314"/>
    <property type="project" value="ComplexPortal"/>
</dbReference>
<dbReference type="GO" id="GO:0022625">
    <property type="term" value="C:cytosolic large ribosomal subunit"/>
    <property type="evidence" value="ECO:0000314"/>
    <property type="project" value="CAFA"/>
</dbReference>
<dbReference type="GO" id="GO:0019843">
    <property type="term" value="F:rRNA binding"/>
    <property type="evidence" value="ECO:0007669"/>
    <property type="project" value="UniProtKB-KW"/>
</dbReference>
<dbReference type="GO" id="GO:0003735">
    <property type="term" value="F:structural constituent of ribosome"/>
    <property type="evidence" value="ECO:0000314"/>
    <property type="project" value="CAFA"/>
</dbReference>
<dbReference type="GO" id="GO:0002181">
    <property type="term" value="P:cytoplasmic translation"/>
    <property type="evidence" value="ECO:0000303"/>
    <property type="project" value="ComplexPortal"/>
</dbReference>
<dbReference type="GO" id="GO:0000027">
    <property type="term" value="P:ribosomal large subunit assembly"/>
    <property type="evidence" value="ECO:0000314"/>
    <property type="project" value="CAFA"/>
</dbReference>
<dbReference type="CDD" id="cd00427">
    <property type="entry name" value="Ribosomal_L29_HIP"/>
    <property type="match status" value="1"/>
</dbReference>
<dbReference type="Gene3D" id="6.10.140.1970">
    <property type="match status" value="1"/>
</dbReference>
<dbReference type="HAMAP" id="MF_00374">
    <property type="entry name" value="Ribosomal_uL29"/>
    <property type="match status" value="1"/>
</dbReference>
<dbReference type="InterPro" id="IPR050063">
    <property type="entry name" value="Ribosomal_protein_uL29"/>
</dbReference>
<dbReference type="InterPro" id="IPR001854">
    <property type="entry name" value="Ribosomal_uL29"/>
</dbReference>
<dbReference type="InterPro" id="IPR018254">
    <property type="entry name" value="Ribosomal_uL29_CS"/>
</dbReference>
<dbReference type="InterPro" id="IPR036049">
    <property type="entry name" value="Ribosomal_uL29_sf"/>
</dbReference>
<dbReference type="NCBIfam" id="TIGR00012">
    <property type="entry name" value="L29"/>
    <property type="match status" value="1"/>
</dbReference>
<dbReference type="PANTHER" id="PTHR10916">
    <property type="entry name" value="60S RIBOSOMAL PROTEIN L35/50S RIBOSOMAL PROTEIN L29"/>
    <property type="match status" value="1"/>
</dbReference>
<dbReference type="PANTHER" id="PTHR10916:SF0">
    <property type="entry name" value="LARGE RIBOSOMAL SUBUNIT PROTEIN UL29C"/>
    <property type="match status" value="1"/>
</dbReference>
<dbReference type="Pfam" id="PF00831">
    <property type="entry name" value="Ribosomal_L29"/>
    <property type="match status" value="1"/>
</dbReference>
<dbReference type="SUPFAM" id="SSF46561">
    <property type="entry name" value="Ribosomal protein L29 (L29p)"/>
    <property type="match status" value="1"/>
</dbReference>
<dbReference type="PROSITE" id="PS00579">
    <property type="entry name" value="RIBOSOMAL_L29"/>
    <property type="match status" value="1"/>
</dbReference>
<organism>
    <name type="scientific">Escherichia coli (strain K12)</name>
    <dbReference type="NCBI Taxonomy" id="83333"/>
    <lineage>
        <taxon>Bacteria</taxon>
        <taxon>Pseudomonadati</taxon>
        <taxon>Pseudomonadota</taxon>
        <taxon>Gammaproteobacteria</taxon>
        <taxon>Enterobacterales</taxon>
        <taxon>Enterobacteriaceae</taxon>
        <taxon>Escherichia</taxon>
    </lineage>
</organism>
<accession>P0A7M6</accession>
<accession>P02429</accession>
<accession>Q2M6X7</accession>
<reference key="1">
    <citation type="journal article" date="1975" name="Biochim. Biophys. Acta">
        <title>The primary structure of the ribosomal protein L29 from Escherichia coli.</title>
        <authorList>
            <person name="Bitar K.G."/>
        </authorList>
    </citation>
    <scope>PROTEIN SEQUENCE</scope>
    <scope>SUBUNIT</scope>
    <source>
        <strain>K</strain>
    </source>
</reference>
<reference key="2">
    <citation type="journal article" date="1985" name="Nucleic Acids Res.">
        <title>Structure of the Escherichia coli S10 ribosomal protein operon.</title>
        <authorList>
            <person name="Zurawski G."/>
            <person name="Zurawski S.M."/>
        </authorList>
    </citation>
    <scope>NUCLEOTIDE SEQUENCE [GENOMIC DNA]</scope>
</reference>
<reference key="3">
    <citation type="journal article" date="1997" name="Science">
        <title>The complete genome sequence of Escherichia coli K-12.</title>
        <authorList>
            <person name="Blattner F.R."/>
            <person name="Plunkett G. III"/>
            <person name="Bloch C.A."/>
            <person name="Perna N.T."/>
            <person name="Burland V."/>
            <person name="Riley M."/>
            <person name="Collado-Vides J."/>
            <person name="Glasner J.D."/>
            <person name="Rode C.K."/>
            <person name="Mayhew G.F."/>
            <person name="Gregor J."/>
            <person name="Davis N.W."/>
            <person name="Kirkpatrick H.A."/>
            <person name="Goeden M.A."/>
            <person name="Rose D.J."/>
            <person name="Mau B."/>
            <person name="Shao Y."/>
        </authorList>
    </citation>
    <scope>NUCLEOTIDE SEQUENCE [LARGE SCALE GENOMIC DNA]</scope>
    <source>
        <strain>K12 / MG1655 / ATCC 47076</strain>
    </source>
</reference>
<reference key="4">
    <citation type="journal article" date="2006" name="Mol. Syst. Biol.">
        <title>Highly accurate genome sequences of Escherichia coli K-12 strains MG1655 and W3110.</title>
        <authorList>
            <person name="Hayashi K."/>
            <person name="Morooka N."/>
            <person name="Yamamoto Y."/>
            <person name="Fujita K."/>
            <person name="Isono K."/>
            <person name="Choi S."/>
            <person name="Ohtsubo E."/>
            <person name="Baba T."/>
            <person name="Wanner B.L."/>
            <person name="Mori H."/>
            <person name="Horiuchi T."/>
        </authorList>
    </citation>
    <scope>NUCLEOTIDE SEQUENCE [LARGE SCALE GENOMIC DNA]</scope>
    <source>
        <strain>K12 / W3110 / ATCC 27325 / DSM 5911</strain>
    </source>
</reference>
<reference key="5">
    <citation type="journal article" date="1981" name="Nucleic Acids Res.">
        <title>The use of 2-iminothiolane as an RNA-protein cross-linking agent in Escherichia coli ribosomes, and the localisation on 23S RNA of sites cross-linked to proteins L4, L6, L21, L23, L27 and L29.</title>
        <authorList>
            <person name="Wower I."/>
            <person name="Wower J."/>
            <person name="Meinke M."/>
            <person name="Brimacombe R."/>
        </authorList>
    </citation>
    <scope>CROSS-LINKING TO 23S RRNA</scope>
    <source>
        <strain>MRE-600</strain>
    </source>
</reference>
<reference key="6">
    <citation type="journal article" date="1985" name="Eur. J. Biochem.">
        <title>A mutant from Escherichia coli which lacks ribosomal proteins S17 and L29 used to localize these two proteins on the ribosomal surface.</title>
        <authorList>
            <person name="Stoeffler-Meilicke M."/>
            <person name="Dabbs E.R."/>
            <person name="Albrecht-Ehrlich R."/>
            <person name="Stoeffler G."/>
        </authorList>
    </citation>
    <scope>CHARACTERIZATION OF A STRAIN MISSING S17 AND L29</scope>
    <source>
        <strain>AM111</strain>
    </source>
</reference>
<reference key="7">
    <citation type="journal article" date="1989" name="Biochemistry">
        <title>Comparative cross-linking study on the 50S ribosomal subunit from Escherichia coli.</title>
        <authorList>
            <person name="Walleczek J."/>
            <person name="Martin T."/>
            <person name="Redl B."/>
            <person name="Stoeffler-Meilicke M."/>
            <person name="Stoeffler G."/>
        </authorList>
    </citation>
    <scope>CROSS-LINKING TO L23</scope>
</reference>
<reference key="8">
    <citation type="journal article" date="1997" name="Electrophoresis">
        <title>Escherichia coli proteome analysis using the gene-protein database.</title>
        <authorList>
            <person name="VanBogelen R.A."/>
            <person name="Abshire K.Z."/>
            <person name="Moldover B."/>
            <person name="Olson E.R."/>
            <person name="Neidhardt F.C."/>
        </authorList>
    </citation>
    <scope>IDENTIFICATION BY 2D-GEL</scope>
</reference>
<reference key="9">
    <citation type="journal article" date="2002" name="Nature">
        <title>L23 protein functions as a chaperone docking site on the ribosome.</title>
        <authorList>
            <person name="Kramer G."/>
            <person name="Rauch T."/>
            <person name="Rist W."/>
            <person name="Vorderwuelbecke S."/>
            <person name="Patzelt H."/>
            <person name="Schulze-Specking A."/>
            <person name="Ban N."/>
            <person name="Deuerling E."/>
            <person name="Bukau B."/>
        </authorList>
    </citation>
    <scope>BINDING TO TRIGGER FACTOR</scope>
    <scope>DISRUPTION PHENOTYPE</scope>
    <source>
        <strain>K12 / MC4100 / ATCC 35695 / DSM 6574</strain>
    </source>
</reference>
<reference key="10">
    <citation type="journal article" date="2003" name="J. Cell Biol.">
        <title>Interplay of signal recognition particle and trigger factor at L23 near the nascent chain exit site on the Escherichia coli ribosome.</title>
        <authorList>
            <person name="Ullers R.S."/>
            <person name="Houben E.N.G."/>
            <person name="Raine A."/>
            <person name="ten Hagen-Jongman C.M."/>
            <person name="Ehrenberg M."/>
            <person name="Brunner J."/>
            <person name="Oudega B."/>
            <person name="Harms N."/>
            <person name="Luirink J."/>
        </authorList>
    </citation>
    <scope>CROSS-LINKS TO NASCENT PROTEIN CHAINS</scope>
    <source>
        <strain>K12 / MC4100 / ATCC 35695 / DSM 6574</strain>
    </source>
</reference>
<reference key="11">
    <citation type="journal article" date="1999" name="Anal. Biochem.">
        <title>Observation of Escherichia coli ribosomal proteins and their posttranslational modifications by mass spectrometry.</title>
        <authorList>
            <person name="Arnold R.J."/>
            <person name="Reilly J.P."/>
        </authorList>
    </citation>
    <scope>MASS SPECTROMETRY</scope>
    <scope>SUBUNIT</scope>
    <source>
        <strain>K12 / ATCC 25404 / DSM 5698 / NCIMB 11290</strain>
    </source>
</reference>
<reference key="12">
    <citation type="journal article" date="2005" name="Nature">
        <title>Structure of the E. coli protein-conducting channel bound to a translating ribosome.</title>
        <authorList>
            <person name="Mitra K."/>
            <person name="Schaffitzel C."/>
            <person name="Shaikh T."/>
            <person name="Tama F."/>
            <person name="Jenni S."/>
            <person name="Brooks C.L. III"/>
            <person name="Ban N."/>
            <person name="Frank J."/>
        </authorList>
    </citation>
    <scope>POSSIBLE CONTACT WITH THE SECYEG TRANSLOCATION COMPLEX</scope>
    <source>
        <strain>MRE-600</strain>
    </source>
</reference>
<reference key="13">
    <citation type="journal article" date="2014" name="Curr. Opin. Struct. Biol.">
        <title>A new system for naming ribosomal proteins.</title>
        <authorList>
            <person name="Ban N."/>
            <person name="Beckmann R."/>
            <person name="Cate J.H.D."/>
            <person name="Dinman J.D."/>
            <person name="Dragon F."/>
            <person name="Ellis S.R."/>
            <person name="Lafontaine D.L.J."/>
            <person name="Lindahl L."/>
            <person name="Liljas A."/>
            <person name="Lipton J.M."/>
            <person name="McAlear M.A."/>
            <person name="Moore P.B."/>
            <person name="Noller H.F."/>
            <person name="Ortega J."/>
            <person name="Panse V.G."/>
            <person name="Ramakrishnan V."/>
            <person name="Spahn C.M.T."/>
            <person name="Steitz T.A."/>
            <person name="Tchorzewski M."/>
            <person name="Tollervey D."/>
            <person name="Warren A.J."/>
            <person name="Williamson J.R."/>
            <person name="Wilson D."/>
            <person name="Yonath A."/>
            <person name="Yusupov M."/>
        </authorList>
    </citation>
    <scope>NOMENCLATURE</scope>
</reference>
<reference key="14">
    <citation type="journal article" date="2003" name="Cell">
        <title>Study of the structural dynamics of the E. coli 70S ribosome using real-space refinement.</title>
        <authorList>
            <person name="Gao H."/>
            <person name="Sengupta J."/>
            <person name="Valle M."/>
            <person name="Korostelev A."/>
            <person name="Eswar N."/>
            <person name="Stagg S.M."/>
            <person name="Van Roey P."/>
            <person name="Agrawal R.K."/>
            <person name="Harvey S.C."/>
            <person name="Sali A."/>
            <person name="Chapman M.S."/>
            <person name="Frank J."/>
        </authorList>
    </citation>
    <scope>STRUCTURE BY ELECTRON MICROSCOPY (11.50 ANGSTROMS)</scope>
    <scope>SUBUNIT</scope>
    <source>
        <strain>MRE-600</strain>
    </source>
</reference>
<reference key="15">
    <citation type="journal article" date="2005" name="Science">
        <title>Structures of the bacterial ribosome at 3.5 A resolution.</title>
        <authorList>
            <person name="Schuwirth B.S."/>
            <person name="Borovinskaya M.A."/>
            <person name="Hau C.W."/>
            <person name="Zhang W."/>
            <person name="Vila-Sanjurjo A."/>
            <person name="Holton J.M."/>
            <person name="Cate J.H.D."/>
        </authorList>
    </citation>
    <scope>X-RAY CRYSTALLOGRAPHY (3.46 ANGSTROMS) OF 2 DIFFERENT RIBOSOME STRUCTURES</scope>
    <scope>SUBUNIT</scope>
    <source>
        <strain>MRE-600</strain>
    </source>
</reference>
<reference key="16">
    <citation type="journal article" date="2011" name="Nat. Struct. Mol. Biol.">
        <title>Cryo-EM structure of the ribosome-SecYE complex in the membrane environment.</title>
        <authorList>
            <person name="Frauenfeld J."/>
            <person name="Gumbart J."/>
            <person name="Sluis E.O."/>
            <person name="Funes S."/>
            <person name="Gartmann M."/>
            <person name="Beatrix B."/>
            <person name="Mielke T."/>
            <person name="Berninghausen O."/>
            <person name="Becker T."/>
            <person name="Schulten K."/>
            <person name="Beckmann R."/>
        </authorList>
    </citation>
    <scope>STRUCTURE BY CRYOELECTRON MICROSCOPY IN COMPLEX WITH SECYE AND A NASCENT POLYPEPTIDE CHAIN</scope>
    <scope>SUBUNIT</scope>
</reference>
<reference key="17">
    <citation type="journal article" date="2014" name="Cell Rep.">
        <title>Molecular basis for the ribosome functioning as an L-tryptophan sensor.</title>
        <authorList>
            <person name="Bischoff L."/>
            <person name="Berninghausen O."/>
            <person name="Beckmann R."/>
        </authorList>
    </citation>
    <scope>STRUCTURE BY ELECTRON MICROSCOPY (3.80 ANGSTROMS) OF TNAC-STALLED 50S RIBOSOMAL SUBUNIT</scope>
    <scope>SUBUNIT</scope>
    <source>
        <strain>K12 / A19 / KC6</strain>
    </source>
</reference>
<reference key="18">
    <citation type="journal article" date="2014" name="PLoS Biol.">
        <title>Structural and functional insights into the mode of action of a universally conserved Obg GTPase.</title>
        <authorList>
            <person name="Feng B."/>
            <person name="Mandava C.S."/>
            <person name="Guo Q."/>
            <person name="Wang J."/>
            <person name="Cao W."/>
            <person name="Li N."/>
            <person name="Zhang Y."/>
            <person name="Zhang Y."/>
            <person name="Wang Z."/>
            <person name="Wu J."/>
            <person name="Sanyal S."/>
            <person name="Lei J."/>
            <person name="Gao N."/>
        </authorList>
    </citation>
    <scope>STRUCTURE BY ELECTRON MICROSCOPY (5.5 ANGSTROMS) OF 50S RIBOSOMAL SUBUNIT IN COMPLEX WITH OBGE AND GMP-PNP</scope>
    <scope>SUBUNIT</scope>
</reference>
<reference key="19">
    <citation type="journal article" date="2017" name="Nature">
        <title>Mechanistic insights into the alternative translation termination by ArfA and RF2.</title>
        <authorList>
            <person name="Ma C."/>
            <person name="Kurita D."/>
            <person name="Li N."/>
            <person name="Chen Y."/>
            <person name="Himeno H."/>
            <person name="Gao N."/>
        </authorList>
    </citation>
    <scope>STRUCTURE BY ELECTRON MICROSCOPY (3.0 ANGSTROMS) OF 70S RIBOSOME IN COMPLEX WITH ARFA AND RF2</scope>
    <scope>SUBUNIT</scope>
</reference>
<reference key="20">
    <citation type="journal article" date="2017" name="Nature">
        <title>Structural basis for ArfA-RF2-mediated translation termination on mRNAs lacking stop codons.</title>
        <authorList>
            <person name="Huter P."/>
            <person name="Mueller C."/>
            <person name="Beckert B."/>
            <person name="Arenz S."/>
            <person name="Berninghausen O."/>
            <person name="Beckmann R."/>
            <person name="Wilson D.N."/>
        </authorList>
    </citation>
    <scope>STRUCTURE BY ELECTRON MICROSCOPY (3.1 ANGSTROMS) OF 70S RIBOSOME IN COMPLEX WITH ARFA AND RF2</scope>
    <scope>SUBUNIT</scope>
</reference>
<reference key="21">
    <citation type="journal article" date="2016" name="Science">
        <title>Translational termination without a stop codon.</title>
        <authorList>
            <person name="James N.R."/>
            <person name="Brown A."/>
            <person name="Gordiyenko Y."/>
            <person name="Ramakrishnan V."/>
        </authorList>
    </citation>
    <scope>STRUCTURE BY ELECTRON MICROSCOPY (2.97 ANGSTROMS) OF 70S RIBOSOME IN COMPLEX WITH ARFA AND RF2</scope>
    <scope>SUBUNIT</scope>
</reference>
<reference key="22">
    <citation type="journal article" date="2017" name="Nature">
        <title>Structural basis of co-translational quality control by ArfA and RF2 bound to ribosome.</title>
        <authorList>
            <person name="Zeng F."/>
            <person name="Chen Y."/>
            <person name="Remis J."/>
            <person name="Shekhar M."/>
            <person name="Phillips J.C."/>
            <person name="Tajkhorshid E."/>
            <person name="Jin H."/>
        </authorList>
    </citation>
    <scope>STRUCTURE BY ELECTRON MICROSCOPY (3.52 ANGSTROMS) OF 70S RIBOSOME IN COMPLEX WITH ARFA AND RF2</scope>
    <scope>SUBUNIT</scope>
</reference>
<gene>
    <name type="primary">rpmC</name>
    <name type="ordered locus">b3312</name>
    <name type="ordered locus">JW3274</name>
</gene>
<keyword id="KW-0002">3D-structure</keyword>
<keyword id="KW-0903">Direct protein sequencing</keyword>
<keyword id="KW-1185">Reference proteome</keyword>
<keyword id="KW-0687">Ribonucleoprotein</keyword>
<keyword id="KW-0689">Ribosomal protein</keyword>
<keyword id="KW-0694">RNA-binding</keyword>
<keyword id="KW-0699">rRNA-binding</keyword>
<proteinExistence type="evidence at protein level"/>
<evidence type="ECO:0000269" key="1">
    <source>
    </source>
</evidence>
<evidence type="ECO:0000269" key="2">
    <source>
    </source>
</evidence>
<evidence type="ECO:0000269" key="3">
    <source>
    </source>
</evidence>
<evidence type="ECO:0000269" key="4">
    <source>
    </source>
</evidence>
<evidence type="ECO:0000269" key="5">
    <source>
    </source>
</evidence>
<evidence type="ECO:0000269" key="6">
    <source>
    </source>
</evidence>
<evidence type="ECO:0000269" key="7">
    <source>
    </source>
</evidence>
<evidence type="ECO:0000269" key="8">
    <source>
    </source>
</evidence>
<evidence type="ECO:0000269" key="9">
    <source>
    </source>
</evidence>
<evidence type="ECO:0000269" key="10">
    <source>
    </source>
</evidence>
<evidence type="ECO:0000269" key="11">
    <source>
    </source>
</evidence>
<evidence type="ECO:0000269" key="12">
    <source>
    </source>
</evidence>
<evidence type="ECO:0000269" key="13">
    <source>
    </source>
</evidence>
<evidence type="ECO:0000269" key="14">
    <source>
    </source>
</evidence>
<evidence type="ECO:0000269" key="15">
    <source>
    </source>
</evidence>
<evidence type="ECO:0000303" key="16">
    <source>
    </source>
</evidence>
<evidence type="ECO:0000305" key="17"/>
<evidence type="ECO:0000305" key="18">
    <source>
    </source>
</evidence>
<evidence type="ECO:0007829" key="19">
    <source>
        <dbReference type="PDB" id="8CGK"/>
    </source>
</evidence>